<reference key="1">
    <citation type="journal article" date="1999" name="Br. J. Cancer">
        <title>MOAT-E (ARA) is a full-length MRP/cMOAT subfamily transporter expressed in kidney and liver.</title>
        <authorList>
            <person name="Belinsky M.G."/>
            <person name="Kruh G.D."/>
        </authorList>
    </citation>
    <scope>NUCLEOTIDE SEQUENCE [MRNA] (ISOFORM 1)</scope>
    <scope>VARIANT VAL-848</scope>
</reference>
<reference key="2">
    <citation type="journal article" date="1999" name="Cancer Res.">
        <title>Expression of human MRP6, a homologue of the multidrug resistance protein gene MRP1, in tissues and cancer cells.</title>
        <authorList>
            <person name="Kool M."/>
            <person name="van der Linden M."/>
            <person name="de Haas M."/>
            <person name="Baas F."/>
            <person name="Borst P."/>
        </authorList>
    </citation>
    <scope>NUCLEOTIDE SEQUENCE [MRNA] (ISOFORM 1)</scope>
    <scope>VARIANTS TRP-64 AND VAL-848</scope>
</reference>
<reference key="3">
    <citation type="journal article" date="2001" name="Hepatology">
        <title>A cellular gene up-regulated by hepatitis B virus-encoded X antigen promotes hepatocellular growth and survival.</title>
        <authorList>
            <person name="Lian Z."/>
            <person name="Liu J."/>
            <person name="Pan J."/>
            <person name="Tufan N.L.S."/>
            <person name="Zhu M."/>
            <person name="Arbuthnot P."/>
            <person name="Kew M."/>
            <person name="Clayton M.M."/>
            <person name="Feitelson M.A."/>
        </authorList>
    </citation>
    <scope>NUCLEOTIDE SEQUENCE [MRNA] (ISOFORM 2)</scope>
</reference>
<reference key="4">
    <citation type="journal article" date="2008" name="Biochem. Res. Int.">
        <title>Identification of a new splice variant of the human ABCC6 transporter.</title>
        <authorList>
            <person name="Armentano M.F."/>
            <person name="Ostuni A."/>
            <person name="Infantino V."/>
            <person name="Iacobazzi V."/>
            <person name="Castiglione Morelli M.A."/>
            <person name="Bisaccia F."/>
        </authorList>
    </citation>
    <scope>NUCLEOTIDE SEQUENCE [MRNA] (ISOFORMS 1 AND 3)</scope>
    <scope>VARIANTS VAL-319 AND VAL-848</scope>
    <scope>ALTERNATIVE SPLICING</scope>
    <source>
        <tissue>Liver</tissue>
    </source>
</reference>
<reference key="5">
    <citation type="journal article" date="1999" name="Genomics">
        <title>Genome duplications and other features in 12 Mb of DNA sequence from human chromosome 16p and 16q.</title>
        <authorList>
            <person name="Loftus B.J."/>
            <person name="Kim U.-J."/>
            <person name="Sneddon V.P."/>
            <person name="Kalush F."/>
            <person name="Brandon R."/>
            <person name="Fuhrmann J."/>
            <person name="Mason T."/>
            <person name="Crosby M.L."/>
            <person name="Barnstead M."/>
            <person name="Cronin L."/>
            <person name="Mays A.D."/>
            <person name="Cao Y."/>
            <person name="Xu R.X."/>
            <person name="Kang H.-L."/>
            <person name="Mitchell S."/>
            <person name="Eichler E.E."/>
            <person name="Harris P.C."/>
            <person name="Venter J.C."/>
            <person name="Adams M.D."/>
        </authorList>
    </citation>
    <scope>NUCLEOTIDE SEQUENCE [LARGE SCALE GENOMIC DNA]</scope>
    <scope>VARIANTS TRP-64 AND VAL-848</scope>
</reference>
<reference key="6">
    <citation type="journal article" date="2004" name="Nature">
        <title>The sequence and analysis of duplication-rich human chromosome 16.</title>
        <authorList>
            <person name="Martin J."/>
            <person name="Han C."/>
            <person name="Gordon L.A."/>
            <person name="Terry A."/>
            <person name="Prabhakar S."/>
            <person name="She X."/>
            <person name="Xie G."/>
            <person name="Hellsten U."/>
            <person name="Chan Y.M."/>
            <person name="Altherr M."/>
            <person name="Couronne O."/>
            <person name="Aerts A."/>
            <person name="Bajorek E."/>
            <person name="Black S."/>
            <person name="Blumer H."/>
            <person name="Branscomb E."/>
            <person name="Brown N.C."/>
            <person name="Bruno W.J."/>
            <person name="Buckingham J.M."/>
            <person name="Callen D.F."/>
            <person name="Campbell C.S."/>
            <person name="Campbell M.L."/>
            <person name="Campbell E.W."/>
            <person name="Caoile C."/>
            <person name="Challacombe J.F."/>
            <person name="Chasteen L.A."/>
            <person name="Chertkov O."/>
            <person name="Chi H.C."/>
            <person name="Christensen M."/>
            <person name="Clark L.M."/>
            <person name="Cohn J.D."/>
            <person name="Denys M."/>
            <person name="Detter J.C."/>
            <person name="Dickson M."/>
            <person name="Dimitrijevic-Bussod M."/>
            <person name="Escobar J."/>
            <person name="Fawcett J.J."/>
            <person name="Flowers D."/>
            <person name="Fotopulos D."/>
            <person name="Glavina T."/>
            <person name="Gomez M."/>
            <person name="Gonzales E."/>
            <person name="Goodstein D."/>
            <person name="Goodwin L.A."/>
            <person name="Grady D.L."/>
            <person name="Grigoriev I."/>
            <person name="Groza M."/>
            <person name="Hammon N."/>
            <person name="Hawkins T."/>
            <person name="Haydu L."/>
            <person name="Hildebrand C.E."/>
            <person name="Huang W."/>
            <person name="Israni S."/>
            <person name="Jett J."/>
            <person name="Jewett P.B."/>
            <person name="Kadner K."/>
            <person name="Kimball H."/>
            <person name="Kobayashi A."/>
            <person name="Krawczyk M.-C."/>
            <person name="Leyba T."/>
            <person name="Longmire J.L."/>
            <person name="Lopez F."/>
            <person name="Lou Y."/>
            <person name="Lowry S."/>
            <person name="Ludeman T."/>
            <person name="Manohar C.F."/>
            <person name="Mark G.A."/>
            <person name="McMurray K.L."/>
            <person name="Meincke L.J."/>
            <person name="Morgan J."/>
            <person name="Moyzis R.K."/>
            <person name="Mundt M.O."/>
            <person name="Munk A.C."/>
            <person name="Nandkeshwar R.D."/>
            <person name="Pitluck S."/>
            <person name="Pollard M."/>
            <person name="Predki P."/>
            <person name="Parson-Quintana B."/>
            <person name="Ramirez L."/>
            <person name="Rash S."/>
            <person name="Retterer J."/>
            <person name="Ricke D.O."/>
            <person name="Robinson D.L."/>
            <person name="Rodriguez A."/>
            <person name="Salamov A."/>
            <person name="Saunders E.H."/>
            <person name="Scott D."/>
            <person name="Shough T."/>
            <person name="Stallings R.L."/>
            <person name="Stalvey M."/>
            <person name="Sutherland R.D."/>
            <person name="Tapia R."/>
            <person name="Tesmer J.G."/>
            <person name="Thayer N."/>
            <person name="Thompson L.S."/>
            <person name="Tice H."/>
            <person name="Torney D.C."/>
            <person name="Tran-Gyamfi M."/>
            <person name="Tsai M."/>
            <person name="Ulanovsky L.E."/>
            <person name="Ustaszewska A."/>
            <person name="Vo N."/>
            <person name="White P.S."/>
            <person name="Williams A.L."/>
            <person name="Wills P.L."/>
            <person name="Wu J.-R."/>
            <person name="Wu K."/>
            <person name="Yang J."/>
            <person name="DeJong P."/>
            <person name="Bruce D."/>
            <person name="Doggett N.A."/>
            <person name="Deaven L."/>
            <person name="Schmutz J."/>
            <person name="Grimwood J."/>
            <person name="Richardson P."/>
            <person name="Rokhsar D.S."/>
            <person name="Eichler E.E."/>
            <person name="Gilna P."/>
            <person name="Lucas S.M."/>
            <person name="Myers R.M."/>
            <person name="Rubin E.M."/>
            <person name="Pennacchio L.A."/>
        </authorList>
    </citation>
    <scope>NUCLEOTIDE SEQUENCE [LARGE SCALE GENOMIC DNA]</scope>
</reference>
<reference key="7">
    <citation type="journal article" date="2004" name="Genome Res.">
        <title>The status, quality, and expansion of the NIH full-length cDNA project: the Mammalian Gene Collection (MGC).</title>
        <authorList>
            <consortium name="The MGC Project Team"/>
        </authorList>
    </citation>
    <scope>NUCLEOTIDE SEQUENCE [LARGE SCALE MRNA] (ISOFORMS 1 AND 2)</scope>
    <scope>VARIANTS ALA-614; GLN-632 AND VAL-848</scope>
    <source>
        <tissue>Retinoblastoma</tissue>
    </source>
</reference>
<reference key="8">
    <citation type="journal article" date="2002" name="Cancer Res.">
        <title>Characterization of the drug resistance and transport properties of multidrug resistance protein 6 (MRP6, ABCC6).</title>
        <authorList>
            <person name="Belinsky M.G."/>
            <person name="Chen Z.S."/>
            <person name="Shchaveleva I."/>
            <person name="Zeng H."/>
            <person name="Kruh G.D."/>
        </authorList>
    </citation>
    <scope>CATALYTIC ACTIVITY</scope>
    <scope>FUNCTION</scope>
    <scope>COFACTOR</scope>
</reference>
<reference key="9">
    <citation type="journal article" date="2002" name="J. Biol. Chem.">
        <title>Loss of ATP-dependent transport activity in pseudoxanthoma elasticum-associated mutants of human ABCC6 (MRP6).</title>
        <authorList>
            <person name="Ilias A."/>
            <person name="Urban Z."/>
            <person name="Seidl T.L."/>
            <person name="Le Saux O."/>
            <person name="Sinko E."/>
            <person name="Boyd C.D."/>
            <person name="Sarkadi B."/>
            <person name="Varadi A."/>
        </authorList>
    </citation>
    <scope>FUNCTION</scope>
    <scope>CHARACTERIZATION OF VARIANTS PXE PHE-1298; ARG-1302 AND SER-1321</scope>
    <scope>CATALYTIC ACTIVITY</scope>
    <scope>COFACTOR</scope>
    <scope>BIOPHYSICOCHEMICAL PROPERTIES</scope>
</reference>
<reference key="10">
    <citation type="journal article" date="2001" name="Trends Mol. Med.">
        <title>Molecular genetics of pseudoxanthoma elasticum: a metabolic disorder at the environment-genome interface?</title>
        <authorList>
            <person name="Uitto J."/>
            <person name="Pulkkinen L."/>
            <person name="Ringpfeil F."/>
        </authorList>
    </citation>
    <scope>REVIEW</scope>
    <scope>VARIANT PXE PRO-455</scope>
</reference>
<reference key="11">
    <citation type="journal article" date="2003" name="Biochem. Biophys. Res. Commun.">
        <title>Subcellular localization and N-glycosylation of human ABCC6, expressed in MDCKII cells.</title>
        <authorList>
            <person name="Sinko E."/>
            <person name="Ilias A."/>
            <person name="Ujhelly O."/>
            <person name="Homolya L."/>
            <person name="Scheffer G.L."/>
            <person name="Bergen A.A."/>
            <person name="Sarkadi B."/>
            <person name="Varadi A."/>
        </authorList>
    </citation>
    <scope>SUBCELLULAR LOCATION</scope>
    <scope>TOPOLOGY</scope>
    <scope>GLYCOSYLATION AT ASN-15</scope>
</reference>
<reference key="12">
    <citation type="journal article" date="2013" name="Circ. Res.">
        <title>ABCC6 is a basolateral plasma membrane protein.</title>
        <authorList>
            <person name="Pomozi V."/>
            <person name="Le Saux O."/>
            <person name="Brampton C."/>
            <person name="Apana A."/>
            <person name="Ilias A."/>
            <person name="Szeri F."/>
            <person name="Martin L."/>
            <person name="Monostory K."/>
            <person name="Paku S."/>
            <person name="Sarkadi B."/>
            <person name="Szakacs G."/>
            <person name="Varadi A."/>
        </authorList>
    </citation>
    <scope>SUBCELLULAR LOCATION</scope>
</reference>
<reference key="13">
    <citation type="journal article" date="2013" name="FEBS Lett.">
        <title>The hepatitis B x antigen anti-apoptotic effector URG7 is localized to the endoplasmic reticulum membrane.</title>
        <authorList>
            <person name="Ostuni A."/>
            <person name="Lara P."/>
            <person name="Armentano M.F."/>
            <person name="Miglionico R."/>
            <person name="Salvia A.M."/>
            <person name="Monnich M."/>
            <person name="Carmosino M."/>
            <person name="Lasorsa F.M."/>
            <person name="Monne M."/>
            <person name="Nilsson I."/>
            <person name="Bisaccia F."/>
        </authorList>
    </citation>
    <scope>FUNCTION (ISOFORM 2)</scope>
    <scope>INDUCTION (ISOFORM 2)</scope>
    <scope>SUBCELLULAR LOCATION (ISOFORM 2)</scope>
</reference>
<reference key="14">
    <citation type="journal article" date="2013" name="Proc. Natl. Acad. Sci. U.S.A.">
        <title>ABCC6 prevents ectopic mineralization seen in pseudoxanthoma elasticum by inducing cellular nucleotide release.</title>
        <authorList>
            <person name="Jansen R.S."/>
            <person name="Kuecuekosmanoglu A."/>
            <person name="de Haas M."/>
            <person name="Sapthu S."/>
            <person name="Otero J.A."/>
            <person name="Hegman I.E."/>
            <person name="Bergen A.A."/>
            <person name="Gorgels T.G."/>
            <person name="Borst P."/>
            <person name="van de Wetering K."/>
        </authorList>
    </citation>
    <scope>FUNCTION</scope>
    <scope>CHARACTERIZATION OF VARIANT PXE PHE-1298</scope>
</reference>
<reference key="15">
    <citation type="journal article" date="2014" name="Arterioscler. Thromb. Vasc. Biol.">
        <title>ABCC6-mediated ATP secretion by the liver is the main source of the mineralization inhibitor inorganic pyrophosphate in the systemic circulation-brief report.</title>
        <authorList>
            <person name="Jansen R.S."/>
            <person name="Duijst S."/>
            <person name="Mahakena S."/>
            <person name="Sommer D."/>
            <person name="Szeri F."/>
            <person name="Varadi A."/>
            <person name="Plomp A."/>
            <person name="Bergen A.A."/>
            <person name="Oude Elferink R.P."/>
            <person name="Borst P."/>
            <person name="van de Wetering K."/>
        </authorList>
    </citation>
    <scope>FUNCTION</scope>
</reference>
<reference key="16">
    <citation type="journal article" date="2014" name="J. Proteomics">
        <title>An enzyme assisted RP-RPLC approach for in-depth analysis of human liver phosphoproteome.</title>
        <authorList>
            <person name="Bian Y."/>
            <person name="Song C."/>
            <person name="Cheng K."/>
            <person name="Dong M."/>
            <person name="Wang F."/>
            <person name="Huang J."/>
            <person name="Sun D."/>
            <person name="Wang L."/>
            <person name="Ye M."/>
            <person name="Zou H."/>
        </authorList>
    </citation>
    <scope>PHOSPHORYLATION [LARGE SCALE ANALYSIS] AT SER-1286</scope>
    <scope>IDENTIFICATION BY MASS SPECTROMETRY [LARGE SCALE ANALYSIS]</scope>
    <source>
        <tissue>Liver</tissue>
    </source>
</reference>
<reference key="17">
    <citation type="journal article" date="2022" name="Drug Metab. Dispos.">
        <title>Localization of Xenobiotic Transporters Expressed at the Human Blood-Testis Barrier.</title>
        <authorList>
            <person name="Hau R.K."/>
            <person name="Klein R.R."/>
            <person name="Wright S.H."/>
            <person name="Cherrington N.J."/>
        </authorList>
    </citation>
    <scope>FUNCTION</scope>
    <scope>SUBCELLULAR LOCATION</scope>
    <scope>TISSUE SPECIFICITY</scope>
</reference>
<reference key="18">
    <citation type="journal article" date="2000" name="Biochem. Biophys. Res. Commun.">
        <title>Homozygosity for the R1268Q mutation in MRP6, the pseudoxanthoma elasticum gene, is not disease-causing.</title>
        <authorList>
            <person name="Germain D.P."/>
            <person name="Perdu J."/>
            <person name="Remones V."/>
            <person name="Jeunemaitre X."/>
        </authorList>
    </citation>
    <scope>VARIANT GLN-1268</scope>
</reference>
<reference key="19">
    <citation type="journal article" date="2000" name="Hum. Mutat.">
        <title>Identification of two polymorphisms (c189G&gt;C; c190T&gt;C) in exon 2 of the human MRP6 gene (ABCC6) by screening of Pseudoxanthoma elasticum patients: possible sequence correction?</title>
        <authorList>
            <person name="Germain D.P."/>
            <person name="Perdu J."/>
            <person name="Remones V."/>
            <person name="Manzoni K."/>
            <person name="Jeunemaitre X."/>
        </authorList>
    </citation>
    <scope>VARIANT TRP-64</scope>
</reference>
<reference key="20">
    <citation type="journal article" date="2000" name="J. Mol. Med.">
        <title>Mutations of the gene encoding the transmembrane transporter protein ABC-C6 cause pseudoxanthoma elasticum.</title>
        <authorList>
            <person name="Struk B."/>
            <person name="Cai L."/>
            <person name="Zaech S."/>
            <person name="Ji W."/>
            <person name="Chung J."/>
            <person name="Lumsden A."/>
            <person name="Stumm M."/>
            <person name="Huber M."/>
            <person name="Schaen L."/>
            <person name="Kim C.-A."/>
            <person name="Goldsmith L.A."/>
            <person name="Viljoen D."/>
            <person name="Figuera L.E."/>
            <person name="Fuchs W."/>
            <person name="Munier F."/>
            <person name="Ramesar R."/>
            <person name="Hohl D."/>
            <person name="Richards R."/>
            <person name="Neldner K.H."/>
            <person name="Lindpaintner K."/>
        </authorList>
    </citation>
    <scope>VARIANT PXE CYS-1339</scope>
    <scope>VARIANT GLN-632</scope>
</reference>
<reference key="21">
    <citation type="journal article" date="2000" name="Nat. Genet.">
        <title>Mutations in a gene encoding an ABC transporter cause pseudoxanthoma elasticum.</title>
        <authorList>
            <person name="Le Saux O."/>
            <person name="Urban Z."/>
            <person name="Tschuch C."/>
            <person name="Csiszar K."/>
            <person name="Bacchelli B."/>
            <person name="Quaglino D."/>
            <person name="Pasquali-Ronchetti I."/>
            <person name="Pope F.M."/>
            <person name="Richards A."/>
            <person name="Terry S."/>
            <person name="Bercovitch L."/>
            <person name="de Paepe A."/>
            <person name="Boyd C.D."/>
        </authorList>
    </citation>
    <scope>VARIANTS PXE PRO-1114; GLN-1138 AND TRP-1314</scope>
    <scope>VARIANT ALA-614</scope>
</reference>
<reference key="22">
    <citation type="journal article" date="2000" name="Proc. Natl. Acad. Sci. U.S.A.">
        <title>Pseudoxanthoma elasticum: mutations in the MRP6 gene encoding a transmembrane ATP-binding cassette (ABC) transporter.</title>
        <authorList>
            <person name="Ringpfeil F."/>
            <person name="Lebwohl M.G."/>
            <person name="Christiano A.M."/>
            <person name="Uitto J."/>
        </authorList>
    </citation>
    <scope>VARIANT PXE TRP-1138</scope>
    <scope>VARIANT GLN-1268</scope>
</reference>
<reference key="23">
    <citation type="journal article" date="2001" name="Am. J. Hum. Genet.">
        <title>A spectrum of ABCC6 mutations is responsible for pseudoxanthoma elasticum.</title>
        <authorList>
            <person name="Le Saux O."/>
            <person name="Beck K."/>
            <person name="Sachsinger C."/>
            <person name="Silvestri C."/>
            <person name="Treiber C."/>
            <person name="Goering H.H.H."/>
            <person name="Johnson E.W."/>
            <person name="De Paepe A."/>
            <person name="Pope F.M."/>
            <person name="Pasquali-Ronchetti I."/>
            <person name="Bercovitch L."/>
            <person name="Terry S."/>
            <person name="Boyd C.D."/>
        </authorList>
    </citation>
    <scope>VARIANTS PXE LYS-411; GLN-518; SER-568; PRO-673; GLN-765; PRO-1114; TRP-1121; PRO-1138; GLN-1138; ASP-1203; PHE-1298; ILE-1301; ARG-1302; PRO-1303; GLN-1314; TRP-1314; SER-1321; CYS-1339; HIS-1347; ASN-1361 AND THR-1424</scope>
    <scope>VARIANTS ASP-61; ARG-207; GLY-265; GLU-281; VAL-319; LYS-497; ALA-614; GLN-632; HIS-953; CYS-1241 AND GLN-1268</scope>
</reference>
<reference key="24">
    <citation type="journal article" date="2001" name="Hum. Genet.">
        <title>Identification of ABCC6 pseudogenes on human chromosome 16p: implications for mutation detection in pseudoxanthoma elasticum.</title>
        <authorList>
            <person name="Pulkkinen L."/>
            <person name="Nakano A."/>
            <person name="Ringpfeil F."/>
            <person name="Uitto J."/>
        </authorList>
    </citation>
    <scope>VARIANTS PXE 60-ARG--TYR-62 DEL; ARG-364 AND ARG-1354</scope>
    <scope>VARIANT GLY-265</scope>
</reference>
<reference key="25">
    <citation type="journal article" date="2001" name="J. Hum. Genet.">
        <title>ABCC6 gene polymorphism associated with variation in plasma lipoproteins.</title>
        <authorList>
            <person name="Wang J."/>
            <person name="Near S."/>
            <person name="Young K."/>
            <person name="Connelly P.W."/>
            <person name="Hegele R.A."/>
        </authorList>
    </citation>
    <scope>VARIANTS ALA-614; GLN-632 AND GLN-1268</scope>
</reference>
<reference key="26">
    <citation type="journal article" date="2004" name="Am. J. Med. Genet. A">
        <title>Does autosomal dominant pseudoxanthoma elasticum exist?</title>
        <authorList>
            <person name="Plomp A.S."/>
            <person name="Hu X."/>
            <person name="de Jong P.T."/>
            <person name="Bergen A.A."/>
        </authorList>
    </citation>
    <scope>VARIANT PXE CYS-1459</scope>
</reference>
<reference key="27">
    <citation type="journal article" date="2004" name="Hum. Mutat.">
        <title>ABCC6 mutations in Italian families affected by pseudoxanthoma elasticum (PXE).</title>
        <authorList>
            <person name="Gheduzzi D."/>
            <person name="Guidetti R."/>
            <person name="Anzivino C."/>
            <person name="Tarugi P."/>
            <person name="Di Leo E."/>
            <person name="Quaglino D."/>
            <person name="Ronchetti I.P."/>
        </authorList>
    </citation>
    <scope>VARIANTS PXE ARG-364; LYS-411; GLY-440; GLN-518; CYS-600; MET-810; PRO-820; CYS-1114; MET-1130; GLN-1138; CYS-1339; SER-1346 AND LYS-1400</scope>
</reference>
<reference key="28">
    <citation type="journal article" date="2004" name="J. Invest. Dermatol.">
        <title>Novel ABCC6 mutations in pseudoxanthoma elasticum.</title>
        <authorList>
            <person name="Chassaing N."/>
            <person name="Martin L."/>
            <person name="Mazereeuw J."/>
            <person name="Barrie L."/>
            <person name="Nizard S."/>
            <person name="Bonafe J.L."/>
            <person name="Calvas P."/>
            <person name="Hovnanian A."/>
        </authorList>
    </citation>
    <scope>VARIANTS PXE VAL-74 DEL; 363-GLN--ARG-373 DEL; GLY-391; GLN-518; ASP-766; MET-1130; GLN-1138; HIS-1238; PRO-1335 AND LYS-1400</scope>
</reference>
<reference key="29">
    <citation type="journal article" date="2005" name="Hum. Mutat.">
        <title>Molecular genetics of pseudoxanthoma elasticum: type and frequency of mutations in ABCC6.</title>
        <authorList>
            <person name="Miksch S."/>
            <person name="Lumsden A."/>
            <person name="Guenther U.P."/>
            <person name="Foernzler D."/>
            <person name="Christen-Zach S."/>
            <person name="Daugherty C."/>
            <person name="Ramesar R.K."/>
            <person name="Lebwohl M."/>
            <person name="Hohl D."/>
            <person name="Neldner K.H."/>
            <person name="Lindpaintner K."/>
            <person name="Richards R.I."/>
            <person name="Struk B."/>
        </authorList>
    </citation>
    <scope>VARIANTS PXE 60-ARG--TYR-62 DEL; GLU-129; ARG-317; ARG-355; ARG-364; ASP-370; GLY-391; GLY-398; HIS-495; GLN-518; SER-551; VAL-594; PRO-677; TRP-760; GLN-765; GLN-807; TRP-807; GLU-1056; PHE-1036 DEL; PHE-1048 DEL; CYS-1114; LEU-1121; GLN-1138; TRP-1138; GLN-1164; CYS-1221; TRP-1235; ARG-1302; PRO-1303; GLN-1314; CYS-1339; LEU-1339 AND TRP-1357</scope>
    <scope>VARIANTS THR-78; LYS-125; VAL-158; GLY-265; GLU-281; VAL-319; ILE-514; ALA-614; GLN-632; LYS-724; VAL-742; ILE-946; TRP-1064 AND GLN-1268</scope>
</reference>
<reference key="30">
    <citation type="journal article" date="2007" name="J. Med. Genet.">
        <title>Mutation detection in the ABCC6 gene and genotype-phenotype analysis in a large international case series affected by pseudoxanthoma elasticum.</title>
        <authorList>
            <person name="Pfendner E.G."/>
            <person name="Vanakker O.M."/>
            <person name="Terry S.F."/>
            <person name="Vourthis S."/>
            <person name="McAndrew P.E."/>
            <person name="McClain M.R."/>
            <person name="Fratta S."/>
            <person name="Marais A.S."/>
            <person name="Hariri S."/>
            <person name="Coucke P.J."/>
            <person name="Ramsay M."/>
            <person name="Viljoen D."/>
            <person name="Terry P.F."/>
            <person name="De Paepe A."/>
            <person name="Uitto J."/>
            <person name="Bercovitch L.G."/>
        </authorList>
    </citation>
    <scope>VARIANTS PXE 60-ARG--TYR-62 DEL; ARG-317; ARG-364; TRP-382; GLY-391; ASN-392; HIS-463; HIS-495; GLN-518; PRO-535; SER-568; CYS-600; CYS-663; PRO-698; ASP-699; PRO-726; LYS-751; ARG-755; TRP-760; GLN-765; ASN-777; MET-811; SER-881; ILE-944; THR-950; ARG-992; CYS-1114; MET-1130; ALA-1133; GLN-1138; TRP-1138; THR-1139; GLN-1164; CYS-1221; HIS-1221; ILE-1226; PHE-1298; ARG-1302; PRO-1303; GLN-1314; TRP-1314; GLN-1335; CYS-1339; HIS-1339 AND THR-1342</scope>
</reference>
<reference key="31">
    <citation type="journal article" date="2008" name="Nature">
        <title>DNA sequencing of a cytogenetically normal acute myeloid leukaemia genome.</title>
        <authorList>
            <person name="Ley T.J."/>
            <person name="Mardis E.R."/>
            <person name="Ding L."/>
            <person name="Fulton B."/>
            <person name="McLellan M.D."/>
            <person name="Chen K."/>
            <person name="Dooling D."/>
            <person name="Dunford-Shore B.H."/>
            <person name="McGrath S."/>
            <person name="Hickenbotham M."/>
            <person name="Cook L."/>
            <person name="Abbott R."/>
            <person name="Larson D.E."/>
            <person name="Koboldt D.C."/>
            <person name="Pohl C."/>
            <person name="Smith S."/>
            <person name="Hawkins A."/>
            <person name="Abbott S."/>
            <person name="Locke D."/>
            <person name="Hillier L.W."/>
            <person name="Miner T."/>
            <person name="Fulton L."/>
            <person name="Magrini V."/>
            <person name="Wylie T."/>
            <person name="Glasscock J."/>
            <person name="Conyers J."/>
            <person name="Sander N."/>
            <person name="Shi X."/>
            <person name="Osborne J.R."/>
            <person name="Minx P."/>
            <person name="Gordon D."/>
            <person name="Chinwalla A."/>
            <person name="Zhao Y."/>
            <person name="Ries R.E."/>
            <person name="Payton J.E."/>
            <person name="Westervelt P."/>
            <person name="Tomasson M.H."/>
            <person name="Watson M."/>
            <person name="Baty J."/>
            <person name="Ivanovich J."/>
            <person name="Heath S."/>
            <person name="Shannon W.D."/>
            <person name="Nagarajan R."/>
            <person name="Walter M.J."/>
            <person name="Link D.C."/>
            <person name="Graubert T.A."/>
            <person name="DiPersio J.F."/>
            <person name="Wilson R.K."/>
        </authorList>
    </citation>
    <scope>VARIANT [LARGE SCALE ANALYSIS] GLN-1268</scope>
</reference>
<reference key="32">
    <citation type="journal article" date="2009" name="J. Dermatol. Sci.">
        <title>Spectrum of genetic variation at the ABCC6 locus in South Africans: Pseudoxanthoma elasticum patients and healthy individuals.</title>
        <authorList>
            <person name="Ramsay M."/>
            <person name="Greenberg T."/>
            <person name="Lombard Z."/>
            <person name="Labrum R."/>
            <person name="Lubbe S."/>
            <person name="Aron S."/>
            <person name="Marais A.S."/>
            <person name="Terry S."/>
            <person name="Bercovitch L."/>
            <person name="Viljoen D."/>
        </authorList>
    </citation>
    <scope>VARIANTS PXE GLN-518; PRO-726; GLN-1138; ARG-1302; PRO-1335 AND CYS-1339</scope>
    <scope>VARIANTS THR-78; GLY-265; MET-417; ALA-614; GLN-632; LEU-724; VAL-742; VAL-848 AND ILE-946</scope>
</reference>
<reference key="33">
    <citation type="journal article" date="2010" name="Am. J. Med. Genet. A">
        <title>An unusual severe vascular case of pseudoxanthoma elasticum presenting as generalized arterial calcification of infancy.</title>
        <authorList>
            <person name="Le Boulanger G."/>
            <person name="Labreze C."/>
            <person name="Croue A."/>
            <person name="Schurgers L.J."/>
            <person name="Chassaing N."/>
            <person name="Wittkampf T."/>
            <person name="Rutsch F."/>
            <person name="Martin L."/>
        </authorList>
    </citation>
    <scope>VARIANTS PXE GLN-765 AND LYS-1406</scope>
</reference>
<reference key="34">
    <citation type="journal article" date="2012" name="Am. J. Hum. Genet.">
        <title>Generalized arterial calcification of infancy and pseudoxanthoma elasticum can be caused by mutations in either ENPP1 or ABCC6.</title>
        <authorList>
            <person name="Nitschke Y."/>
            <person name="Baujat G."/>
            <person name="Botschen U."/>
            <person name="Wittkampf T."/>
            <person name="du Moulin M."/>
            <person name="Stella J."/>
            <person name="Le Merrer M."/>
            <person name="Guest G."/>
            <person name="Lambot K."/>
            <person name="Tazarourte-Pinturier M.F."/>
            <person name="Chassaing N."/>
            <person name="Roche O."/>
            <person name="Feenstra I."/>
            <person name="Loechner K."/>
            <person name="Deshpande C."/>
            <person name="Garber S.J."/>
            <person name="Chikarmane R."/>
            <person name="Steinmann B."/>
            <person name="Shahinyan T."/>
            <person name="Martorell L."/>
            <person name="Davies J."/>
            <person name="Smith W.E."/>
            <person name="Kahler S.G."/>
            <person name="McCulloch M."/>
            <person name="Wraige E."/>
            <person name="Loidi L."/>
            <person name="Hohne W."/>
            <person name="Martin L."/>
            <person name="Hadj-Rabia S."/>
            <person name="Terkeltaub R."/>
            <person name="Rutsch F."/>
        </authorList>
    </citation>
    <scope>VARIANTS GACI2 ARG-355; GLY-391; PHE-590; PHE-1036 DEL; CYS-1114; HIS-1221 AND TRP-1314</scope>
</reference>
<reference key="35">
    <citation type="journal article" date="2015" name="J. Invest. Dermatol.">
        <title>Genetic heterogeneity of pseudoxanthoma elasticum: the chinese signature profile of ABCC6 and ENPP1 mutations.</title>
        <authorList>
            <person name="Jin L."/>
            <person name="Jiang Q."/>
            <person name="Wu Z."/>
            <person name="Shao C."/>
            <person name="Zhou Y."/>
            <person name="Yang L."/>
            <person name="Uitto J."/>
            <person name="Wang G."/>
        </authorList>
    </citation>
    <scope>VARIANTS PXE THR-78 AND LYS-125</scope>
    <scope>VARIANTS HIS-4; GLU-9; SER-21; GLN-64; THR-90; GLN-419; PRO-605; GLY-709; THR-834; PRO-948 AND THR-1442</scope>
    <scope>CHARACTERIZATION OF VARIANTS HIS-4; GLU-9; SER-21; GLN-64; THR-90; GLN-419; PRO-605; GLY-709; THR-834; PRO-948 AND THR-1442</scope>
    <scope>CHARACTERIZATION OF VARIANTS PXE THR-78 AND LYS-125</scope>
</reference>
<reference evidence="50" key="36">
    <citation type="journal article" date="2018" name="J. Biol. Chem.">
        <title>Structural analysis reveals pathomechanisms associated with pseudoxanthoma elasticum-causing mutations in the ABCC6 transporter.</title>
        <authorList>
            <person name="Ran Y."/>
            <person name="Zheng A."/>
            <person name="Thibodeau P.H."/>
        </authorList>
    </citation>
    <scope>X-RAY CRYSTALLOGRAPHY (2.30 ANGSTROMS) OF 622-859</scope>
    <scope>CHARACTERIZATION OF VARIANTS PXE CYS-663; PRO-673; PRO-677; PRO-698; ASP-699; PRO-726; ARG-755; TRP-760; GLN-765; ASP-766; ASN-777; MET-811 AND PRO-820</scope>
    <scope>GLYCOSYLATION</scope>
</reference>
<reference evidence="49 51 52" key="37">
    <citation type="submission" date="2019-06" db="PDB data bank">
        <title>Structures of human ABCC6 NBD1 and NBD2.</title>
        <authorList>
            <person name="Zheng A."/>
            <person name="Thibodeau P.H."/>
        </authorList>
    </citation>
    <scope>X-RAY CRYSTALLOGRAPHY (2.80 ANGSTROMS) OF 1254-1503</scope>
</reference>
<keyword id="KW-0002">3D-structure</keyword>
<keyword id="KW-0025">Alternative splicing</keyword>
<keyword id="KW-0067">ATP-binding</keyword>
<keyword id="KW-1003">Cell membrane</keyword>
<keyword id="KW-0225">Disease variant</keyword>
<keyword id="KW-0256">Endoplasmic reticulum</keyword>
<keyword id="KW-0325">Glycoprotein</keyword>
<keyword id="KW-0472">Membrane</keyword>
<keyword id="KW-0547">Nucleotide-binding</keyword>
<keyword id="KW-0597">Phosphoprotein</keyword>
<keyword id="KW-1267">Proteomics identification</keyword>
<keyword id="KW-1185">Reference proteome</keyword>
<keyword id="KW-0677">Repeat</keyword>
<keyword id="KW-0716">Sensory transduction</keyword>
<keyword id="KW-1278">Translocase</keyword>
<keyword id="KW-0812">Transmembrane</keyword>
<keyword id="KW-1133">Transmembrane helix</keyword>
<keyword id="KW-0813">Transport</keyword>
<keyword id="KW-0844">Vision</keyword>
<sequence length="1503" mass="164906">MAAPAEPCAGQGVWNQTEPEPAATSLLSLCFLRTAGVWVPPMYLWVLGPIYLLFIHHHGRGYLRMSPLFKAKMVLGFALIVLCTSSVAVALWKIQQGTPEAPEFLIHPTVWLTTMSFAVFLIHTERKKGVQSSGVLFGYWLLCFVLPATNAAQQASGAGFQSDPVRHLSTYLCLSLVVAQFVLSCLADQPPFFPEDPQQSNPCPETGAAFPSKATFWWVSGLVWRGYRRPLRPKDLWSLGRENSSEELVSRLEKEWMRNRSAARRHNKAIAFKRKGGSGMKAPETEPFLRQEGSQWRPLLKAIWQVFHSTFLLGTLSLIISDVFRFTVPKLLSLFLEFIGDPKPPAWKGYLLAVLMFLSACLQTLFEQQNMYRLKVLQMRLRSAITGLVYRKVLALSSGSRKASAVGDVVNLVSVDVQRLTESVLYLNGLWLPLVWIVVCFVYLWQLLGPSALTAIAVFLSLLPLNFFISKKRNHHQEEQMRQKDSRARLTSSILRNSKTIKFHGWEGAFLDRVLGIRGQELGALRTSGLLFSVSLVSFQVSTFLVALVVFAVHTLVAENAMNAEKAFVTLTVLNILNKAQAFLPFSIHSLVQARVSFDRLVTFLCLEEVDPGVVDSSSSGSAAGKDCITIHSATFAWSQESPPCLHRINLTVPQGCLLAVVGPVGAGKSSLLSALLGELSKVEGFVSIEGAVAYVPQEAWVQNTSVVENVCFGQELDPPWLERVLEACALQPDVDSFPEGIHTSIGEQGMNLSGGQKQRLSLARAVYRKAAVYLLDDPLAALDAHVGQHVFNQVIGPGGLLQGTTRILVTHALHILPQADWIIVLANGAIAEMGSYQELLQRKGALMCLLDQARQPGDRGEGETEPGTSTKDPRGTSAGRRPELRRERSIKSVPEKDRTTSEAQTEVPLDDPDRAGWPAGKDSIQYGRVKATVHLAYLRAVGTPLCLYALFLFLCQQVASFCRGYWLSLWADDPAVGGQQTQAALRGGIFGLLGCLQAIGLFASMAAVLLGGARASRLLFQRLLWDVVRSPISFFERTPIGHLLNRFSKETDTVDVDIPDKLRSLLMYAFGLLEVSLVVAVATPLATVAILPLFLLYAGFQSLYVVSSCQLRRLESASYSSVCSHMAETFQGSTVVRAFRTQAPFVAQNNARVDESQRISFPRLVADRWLAANVELLGNGLVFAAATCAVLSKAHLSAGLVGFSVSAALQVTQTLQWVVRNWTDLENSIVSVERMQDYAWTPKEAPWRLPTCAAQPPWPQGGQIEFRDFGLRYRPELPLAVQGVSFKIHAGEKVGIVGRTGAGKSSLASGLLRLQEAAEGGIWIDGVPIAHVGLHTLRSRISIIPQDPILFPGSLRMNLDLLQEHSDEAIWAALETVQLKALVASLPGQLQYKCADRGEDLSVGQKQLLCLARALLRKTQILILDEATAAVDPGTELQMQAMLGSWFAQCTVLLIAHRLRSVMDCARVLVMDKGQVAESGSPAQLLAQKGLFYRLAQESGLV</sequence>
<protein>
    <recommendedName>
        <fullName>ATP-binding cassette sub-family C member 6</fullName>
        <ecNumber evidence="2">7.6.2.-</ecNumber>
        <ecNumber evidence="18 19">7.6.2.3</ecNumber>
    </recommendedName>
    <alternativeName>
        <fullName>Anthracycline resistance-associated protein</fullName>
    </alternativeName>
    <alternativeName>
        <fullName>Multi-specific organic anion transporter E</fullName>
        <shortName>MOAT-E</shortName>
    </alternativeName>
    <alternativeName>
        <fullName>Multidrug resistance-associated protein 6</fullName>
    </alternativeName>
</protein>
<accession>O95255</accession>
<accession>A2RRN8</accession>
<accession>A8KIG6</accession>
<accession>A8Y988</accession>
<accession>E7ESW8</accession>
<accession>P78420</accession>
<accession>Q8TCY8</accession>
<accession>Q9UMZ7</accession>
<organism>
    <name type="scientific">Homo sapiens</name>
    <name type="common">Human</name>
    <dbReference type="NCBI Taxonomy" id="9606"/>
    <lineage>
        <taxon>Eukaryota</taxon>
        <taxon>Metazoa</taxon>
        <taxon>Chordata</taxon>
        <taxon>Craniata</taxon>
        <taxon>Vertebrata</taxon>
        <taxon>Euteleostomi</taxon>
        <taxon>Mammalia</taxon>
        <taxon>Eutheria</taxon>
        <taxon>Euarchontoglires</taxon>
        <taxon>Primates</taxon>
        <taxon>Haplorrhini</taxon>
        <taxon>Catarrhini</taxon>
        <taxon>Hominidae</taxon>
        <taxon>Homo</taxon>
    </lineage>
</organism>
<feature type="chain" id="PRO_0000093366" description="ATP-binding cassette sub-family C member 6">
    <location>
        <begin position="1"/>
        <end position="1503"/>
    </location>
</feature>
<feature type="topological domain" description="Extracellular" evidence="1">
    <location>
        <begin position="1"/>
        <end position="31"/>
    </location>
</feature>
<feature type="transmembrane region" description="Helical; Name=1" evidence="5">
    <location>
        <begin position="32"/>
        <end position="52"/>
    </location>
</feature>
<feature type="topological domain" description="Cytoplasmic" evidence="1">
    <location>
        <begin position="53"/>
        <end position="72"/>
    </location>
</feature>
<feature type="transmembrane region" description="Helical; Name=2" evidence="5">
    <location>
        <begin position="73"/>
        <end position="93"/>
    </location>
</feature>
<feature type="topological domain" description="Extracellular" evidence="1">
    <location>
        <begin position="94"/>
        <end position="98"/>
    </location>
</feature>
<feature type="transmembrane region" description="Helical; Name=3" evidence="5">
    <location>
        <begin position="99"/>
        <end position="119"/>
    </location>
</feature>
<feature type="topological domain" description="Cytoplasmic" evidence="1">
    <location>
        <begin position="120"/>
        <end position="131"/>
    </location>
</feature>
<feature type="transmembrane region" description="Helical; Name=4" evidence="5">
    <location>
        <begin position="132"/>
        <end position="149"/>
    </location>
</feature>
<feature type="topological domain" description="Extracellular" evidence="1">
    <location>
        <begin position="150"/>
        <end position="167"/>
    </location>
</feature>
<feature type="transmembrane region" description="Helical; Name=5" evidence="5">
    <location>
        <begin position="168"/>
        <end position="188"/>
    </location>
</feature>
<feature type="topological domain" description="Cytoplasmic" evidence="1">
    <location>
        <begin position="189"/>
        <end position="302"/>
    </location>
</feature>
<feature type="transmembrane region" description="Helical; Name=6" evidence="5">
    <location>
        <begin position="303"/>
        <end position="323"/>
    </location>
</feature>
<feature type="topological domain" description="Extracellular" evidence="1">
    <location>
        <begin position="324"/>
        <end position="349"/>
    </location>
</feature>
<feature type="transmembrane region" description="Helical; Name=7" evidence="5">
    <location>
        <begin position="350"/>
        <end position="370"/>
    </location>
</feature>
<feature type="topological domain" description="Cytoplasmic" evidence="1">
    <location>
        <begin position="371"/>
        <end position="426"/>
    </location>
</feature>
<feature type="transmembrane region" description="Helical; Name=8" evidence="5">
    <location>
        <begin position="427"/>
        <end position="447"/>
    </location>
</feature>
<feature type="topological domain" description="Extracellular" evidence="1">
    <location>
        <begin position="448"/>
        <end position="450"/>
    </location>
</feature>
<feature type="transmembrane region" description="Helical; Name=9" evidence="5">
    <location>
        <begin position="451"/>
        <end position="471"/>
    </location>
</feature>
<feature type="topological domain" description="Cytoplasmic" evidence="1">
    <location>
        <begin position="472"/>
        <end position="533"/>
    </location>
</feature>
<feature type="transmembrane region" description="Helical; Name=10" evidence="5">
    <location>
        <begin position="534"/>
        <end position="554"/>
    </location>
</feature>
<feature type="topological domain" description="Extracellular" evidence="1">
    <location>
        <begin position="555"/>
        <end position="575"/>
    </location>
</feature>
<feature type="transmembrane region" description="Helical; Name=11" evidence="5">
    <location>
        <begin position="576"/>
        <end position="596"/>
    </location>
</feature>
<feature type="topological domain" description="Cytoplasmic" evidence="1">
    <location>
        <begin position="597"/>
        <end position="939"/>
    </location>
</feature>
<feature type="transmembrane region" description="Helical; Name=12" evidence="5">
    <location>
        <begin position="940"/>
        <end position="960"/>
    </location>
</feature>
<feature type="topological domain" description="Extracellular" evidence="1">
    <location>
        <begin position="961"/>
        <end position="997"/>
    </location>
</feature>
<feature type="transmembrane region" description="Helical; Name=13" evidence="5">
    <location>
        <begin position="998"/>
        <end position="1018"/>
    </location>
</feature>
<feature type="topological domain" description="Cytoplasmic" evidence="1">
    <location>
        <begin position="1019"/>
        <end position="1061"/>
    </location>
</feature>
<feature type="transmembrane region" description="Helical; Name=14" evidence="5">
    <location>
        <begin position="1062"/>
        <end position="1082"/>
    </location>
</feature>
<feature type="topological domain" description="Extracellular" evidence="1">
    <location>
        <position position="1083"/>
    </location>
</feature>
<feature type="transmembrane region" description="Helical; Name=15" evidence="5">
    <location>
        <begin position="1084"/>
        <end position="1104"/>
    </location>
</feature>
<feature type="topological domain" description="Cytoplasmic" evidence="1">
    <location>
        <begin position="1105"/>
        <end position="1175"/>
    </location>
</feature>
<feature type="transmembrane region" description="Helical; Name=16" evidence="5">
    <location>
        <begin position="1176"/>
        <end position="1196"/>
    </location>
</feature>
<feature type="topological domain" description="Extracellular" evidence="1">
    <location>
        <begin position="1197"/>
        <end position="1198"/>
    </location>
</feature>
<feature type="transmembrane region" description="Helical; Name=17" evidence="5">
    <location>
        <begin position="1199"/>
        <end position="1219"/>
    </location>
</feature>
<feature type="topological domain" description="Cytoplasmic" evidence="1">
    <location>
        <begin position="1220"/>
        <end position="1503"/>
    </location>
</feature>
<feature type="domain" description="ABC transmembrane type-1 1" evidence="5">
    <location>
        <begin position="311"/>
        <end position="593"/>
    </location>
</feature>
<feature type="domain" description="ABC transporter 1" evidence="4">
    <location>
        <begin position="629"/>
        <end position="853"/>
    </location>
</feature>
<feature type="domain" description="ABC transmembrane type-1 2" evidence="5">
    <location>
        <begin position="947"/>
        <end position="1228"/>
    </location>
</feature>
<feature type="domain" description="ABC transporter 2" evidence="4">
    <location>
        <begin position="1265"/>
        <end position="1499"/>
    </location>
</feature>
<feature type="region of interest" description="Disordered" evidence="6">
    <location>
        <begin position="854"/>
        <end position="919"/>
    </location>
</feature>
<feature type="compositionally biased region" description="Basic and acidic residues" evidence="6">
    <location>
        <begin position="881"/>
        <end position="901"/>
    </location>
</feature>
<feature type="binding site" evidence="4">
    <location>
        <begin position="663"/>
        <end position="670"/>
    </location>
    <ligand>
        <name>ATP</name>
        <dbReference type="ChEBI" id="CHEBI:30616"/>
        <label>1</label>
    </ligand>
</feature>
<feature type="binding site" evidence="4">
    <location>
        <begin position="1299"/>
        <end position="1306"/>
    </location>
    <ligand>
        <name>ATP</name>
        <dbReference type="ChEBI" id="CHEBI:30616"/>
        <label>2</label>
    </ligand>
</feature>
<feature type="modified residue" description="Phosphoserine" evidence="53">
    <location>
        <position position="1286"/>
    </location>
</feature>
<feature type="glycosylation site" description="N-linked (GlcNAc...) asparagine" evidence="47">
    <location>
        <position position="15"/>
    </location>
</feature>
<feature type="splice variant" id="VSP_047315" description="In isoform 2." evidence="40 41">
    <original>LGFALIVLCTSSVAVALWKIQQGTP</original>
    <variation>AAIPGSLEPGNVRGRQGTGWNLVKS</variation>
    <location>
        <begin position="75"/>
        <end position="99"/>
    </location>
</feature>
<feature type="splice variant" id="VSP_047316" description="In isoform 2." evidence="40 41">
    <location>
        <begin position="100"/>
        <end position="1503"/>
    </location>
</feature>
<feature type="splice variant" id="VSP_057077" description="In isoform 3." evidence="42">
    <original>TRILVTHALHILPQADWIIVLANGAIAEMGSYQELLQRKGALMCLLDQARQPGDRGEGETEPGTST</original>
    <variation>KQNLGPAPRTPEAPLQAGGPSLDARGPSSQSLRRTVPLQKPRQRFLWMTLTGQDGQQERTASNTAG</variation>
    <location>
        <begin position="806"/>
        <end position="871"/>
    </location>
</feature>
<feature type="splice variant" id="VSP_057078" description="In isoform 3." evidence="42">
    <location>
        <begin position="872"/>
        <end position="1503"/>
    </location>
</feature>
<feature type="sequence variant" id="VAR_072803" description="Found in patient with putative diagnosis of PXE; uncertain significance; loss-of-function mutation; localization comparable to wild-type; dbSNP:rs1555523872." evidence="36">
    <original>P</original>
    <variation>H</variation>
    <location>
        <position position="4"/>
    </location>
</feature>
<feature type="sequence variant" id="VAR_072804" description="Found in patient with putative diagnosis of PXE; uncertain significance; loss-of-function mutation; localization comparable to wild-type; dbSNP:rs1555523855." evidence="36">
    <original>A</original>
    <variation>E</variation>
    <location>
        <position position="9"/>
    </location>
</feature>
<feature type="sequence variant" id="VAR_072805" description="Found in patient with putative diagnosis of PXE; uncertain significance; loss-of-function mutation; localization comparable to wild-type; dbSNP:rs1235912910." evidence="36">
    <original>P</original>
    <variation>S</variation>
    <location>
        <position position="21"/>
    </location>
</feature>
<feature type="sequence variant" id="VAR_013363" description="In PXE." evidence="16 25 26">
    <location>
        <begin position="60"/>
        <end position="62"/>
    </location>
</feature>
<feature type="sequence variant" id="VAR_013364" description="In dbSNP:rs72657696." evidence="15">
    <original>G</original>
    <variation>D</variation>
    <location>
        <position position="61"/>
    </location>
</feature>
<feature type="sequence variant" id="VAR_072806" description="Found in patient with putative diagnosis of PXE; uncertain significance; localization comparable to wild-type; dbSNP:rs777566074." evidence="36">
    <original>R</original>
    <variation>Q</variation>
    <location>
        <position position="64"/>
    </location>
</feature>
<feature type="sequence variant" id="VAR_013365" description="In dbSNP:rs557180313." evidence="8 13 39">
    <original>R</original>
    <variation>W</variation>
    <location>
        <position position="64"/>
    </location>
</feature>
<feature type="sequence variant" id="VAR_067840" description="In PXE; dbSNP:rs72664225." evidence="21">
    <location>
        <position position="74"/>
    </location>
</feature>
<feature type="sequence variant" id="VAR_067841" description="In PXE; dbSNP:rs2856597." evidence="25 28 36">
    <original>A</original>
    <variation>T</variation>
    <location>
        <position position="78"/>
    </location>
</feature>
<feature type="sequence variant" id="VAR_072807" description="Found in patient with putative diagnosis of PXE; uncertain significance; dbSNP:rs957828732." evidence="36">
    <original>A</original>
    <variation>T</variation>
    <location>
        <position position="90"/>
    </location>
</feature>
<feature type="sequence variant" id="VAR_067842" description="In PXE; loss-of-function variant; localization comparable to wild-type; dbSNP:rs879956688." evidence="25 36">
    <original>E</original>
    <variation>K</variation>
    <location>
        <position position="125"/>
    </location>
</feature>
<feature type="sequence variant" id="VAR_067843" description="In PXE; dbSNP:rs72653753." evidence="25">
    <original>G</original>
    <variation>E</variation>
    <location>
        <position position="129"/>
    </location>
</feature>
<feature type="sequence variant" id="VAR_067844" description="In dbSNP:rs2606921." evidence="25">
    <original>A</original>
    <variation>V</variation>
    <location>
        <position position="158"/>
    </location>
</feature>
<feature type="sequence variant" id="VAR_013366" description="In dbSNP:rs72657697." evidence="15">
    <original>G</original>
    <variation>R</variation>
    <location>
        <position position="207"/>
    </location>
</feature>
<feature type="sequence variant" id="VAR_013367" description="In dbSNP:rs72657698." evidence="15 16 25 28">
    <original>R</original>
    <variation>G</variation>
    <location>
        <position position="265"/>
    </location>
</feature>
<feature type="sequence variant" id="VAR_013368" description="In dbSNP:rs879274205." evidence="15 25">
    <original>K</original>
    <variation>E</variation>
    <location>
        <position position="281"/>
    </location>
</feature>
<feature type="sequence variant" id="VAR_067845" description="In PXE; dbSNP:rs78678589." evidence="25 26">
    <original>S</original>
    <variation>R</variation>
    <location>
        <position position="317"/>
    </location>
</feature>
<feature type="sequence variant" id="VAR_013369" description="In dbSNP:rs72657699." evidence="15 25 30">
    <original>I</original>
    <variation>V</variation>
    <location>
        <position position="319"/>
    </location>
</feature>
<feature type="sequence variant" id="VAR_067846" description="In GACI2 and PXE; dbSNP:rs72653758." evidence="25 31">
    <original>L</original>
    <variation>R</variation>
    <location>
        <position position="355"/>
    </location>
</feature>
<feature type="sequence variant" id="VAR_067847" description="In PXE." evidence="21">
    <location>
        <begin position="363"/>
        <end position="373"/>
    </location>
</feature>
<feature type="sequence variant" id="VAR_013370" description="In PXE; dbSNP:rs72653759." evidence="16 23 25 26">
    <original>T</original>
    <variation>R</variation>
    <location>
        <position position="364"/>
    </location>
</feature>
<feature type="sequence variant" id="VAR_067848" description="In PXE; dbSNP:rs72653760." evidence="25">
    <original>N</original>
    <variation>D</variation>
    <location>
        <position position="370"/>
    </location>
</feature>
<feature type="sequence variant" id="VAR_067849" description="In PXE; dbSNP:rs72653761." evidence="26">
    <original>R</original>
    <variation>W</variation>
    <location>
        <position position="382"/>
    </location>
</feature>
<feature type="sequence variant" id="VAR_067850" description="In GACI2 and PXE; dbSNP:rs72653762." evidence="21 25 26 31">
    <original>R</original>
    <variation>G</variation>
    <location>
        <position position="391"/>
    </location>
</feature>
<feature type="sequence variant" id="VAR_067851" description="In PXE; dbSNP:rs72653763." evidence="26">
    <original>K</original>
    <variation>N</variation>
    <location>
        <position position="392"/>
    </location>
</feature>
<feature type="sequence variant" id="VAR_067852" description="In PXE; dbSNP:rs72653764." evidence="25">
    <original>S</original>
    <variation>G</variation>
    <location>
        <position position="398"/>
    </location>
</feature>
<feature type="sequence variant" id="VAR_013371" description="In PXE; uncertain significance; dbSNP:rs9930886." evidence="15 23">
    <original>N</original>
    <variation>K</variation>
    <location>
        <position position="411"/>
    </location>
</feature>
<feature type="sequence variant" id="VAR_067853" description="In dbSNP:rs768869262." evidence="28">
    <original>V</original>
    <variation>M</variation>
    <location>
        <position position="417"/>
    </location>
</feature>
<feature type="sequence variant" id="VAR_072808" description="Found in patient with putative diagnosis of PXE; uncertain significance; loss-of-function mutation; localization comparable to wild-type; dbSNP:rs772434460." evidence="36">
    <original>R</original>
    <variation>Q</variation>
    <location>
        <position position="419"/>
    </location>
</feature>
<feature type="sequence variant" id="VAR_067854" description="In PXE; dbSNP:rs72653766." evidence="23">
    <original>C</original>
    <variation>G</variation>
    <location>
        <position position="440"/>
    </location>
</feature>
<feature type="sequence variant" id="VAR_013372" description="In PXE; dbSNP:rs67996819." evidence="14">
    <original>A</original>
    <variation>P</variation>
    <location>
        <position position="455"/>
    </location>
</feature>
<feature type="sequence variant" id="VAR_067855" description="In PXE; uncertain significance; dbSNP:rs72653767." evidence="26">
    <original>L</original>
    <variation>H</variation>
    <location>
        <position position="463"/>
    </location>
</feature>
<feature type="sequence variant" id="VAR_067856" description="In PXE; dbSNP:rs72653769." evidence="25 26">
    <original>L</original>
    <variation>H</variation>
    <location>
        <position position="495"/>
    </location>
</feature>
<feature type="sequence variant" id="VAR_013373" description="In dbSNP:rs72653770." evidence="15">
    <original>N</original>
    <variation>K</variation>
    <location>
        <position position="497"/>
    </location>
</feature>
<feature type="sequence variant" id="VAR_067857" description="In dbSNP:rs59157279." evidence="25">
    <original>V</original>
    <variation>I</variation>
    <location>
        <position position="514"/>
    </location>
</feature>
<feature type="sequence variant" id="VAR_013374" description="In PXE; dbSNP:rs72653772." evidence="15 21 23 25 26 28">
    <original>R</original>
    <variation>Q</variation>
    <location>
        <position position="518"/>
    </location>
</feature>
<feature type="sequence variant" id="VAR_067858" description="In PXE; dbSNP:rs72653773." evidence="26">
    <original>S</original>
    <variation>P</variation>
    <location>
        <position position="535"/>
    </location>
</feature>
<feature type="sequence variant" id="VAR_067859" description="In PXE; dbSNP:rs72653774." evidence="25">
    <original>F</original>
    <variation>S</variation>
    <location>
        <position position="551"/>
    </location>
</feature>
<feature type="sequence variant" id="VAR_013375" description="In PXE; dbSNP:rs66864704." evidence="15 26">
    <original>F</original>
    <variation>S</variation>
    <location>
        <position position="568"/>
    </location>
</feature>
<feature type="sequence variant" id="VAR_067860" description="In GACI2; dbSNP:rs537233133." evidence="31">
    <original>S</original>
    <variation>F</variation>
    <location>
        <position position="590"/>
    </location>
</feature>
<feature type="sequence variant" id="VAR_067861" description="In PXE; dbSNP:rs72653776." evidence="25">
    <original>A</original>
    <variation>V</variation>
    <location>
        <position position="594"/>
    </location>
</feature>
<feature type="sequence variant" id="VAR_067862" description="In PXE; dbSNP:rs72653777." evidence="23 26">
    <original>R</original>
    <variation>C</variation>
    <location>
        <position position="600"/>
    </location>
</feature>
<feature type="sequence variant" id="VAR_072809" description="Found in patient with putative diagnosis of PEX; uncertain significance; mutant protein is retained in the cytoplasm; dbSNP:rs768271196." evidence="36">
    <original>L</original>
    <variation>P</variation>
    <location>
        <position position="605"/>
    </location>
</feature>
<feature type="sequence variant" id="VAR_011490" description="In dbSNP:rs12931472." evidence="10 15 17 24 25 28">
    <original>V</original>
    <variation>A</variation>
    <location>
        <position position="614"/>
    </location>
</feature>
<feature type="sequence variant" id="VAR_013376" description="In dbSNP:rs8058694." evidence="12 15 17 24 25 28">
    <original>H</original>
    <variation>Q</variation>
    <location>
        <position position="632"/>
    </location>
</feature>
<feature type="sequence variant" id="VAR_067863" description="In PXE; affects protein expression and trafficking; expression is reduced to less than 10%, when compared with the WT protein; dbSNP:rs72653780." evidence="26 37">
    <original>G</original>
    <variation>C</variation>
    <location>
        <position position="663"/>
    </location>
</feature>
<feature type="sequence variant" id="VAR_055477" description="In dbSNP:rs4341770.">
    <original>V</original>
    <variation>A</variation>
    <location>
        <position position="665"/>
    </location>
</feature>
<feature type="sequence variant" id="VAR_013377" description="In PXE; affects protein expression and trafficking; expression is reduced to less than 10%, when compared with the WT protein; dbSNP:rs67470842." evidence="15 37">
    <original>L</original>
    <variation>P</variation>
    <location>
        <position position="673"/>
    </location>
</feature>
<feature type="sequence variant" id="VAR_067864" description="In PXE; dbSNP:rs72653782." evidence="25 37">
    <original>L</original>
    <variation>P</variation>
    <location>
        <position position="677"/>
    </location>
</feature>
<feature type="sequence variant" id="VAR_067865" description="In PXE; does not change protein biosynthesis and folding; dbSNP:rs72653783." evidence="26 37">
    <original>Q</original>
    <variation>P</variation>
    <location>
        <position position="698"/>
    </location>
</feature>
<feature type="sequence variant" id="VAR_067866" description="In PXE; does not change protein biosynthesis and folding; dbSNP:rs72653784." evidence="26 37">
    <original>E</original>
    <variation>D</variation>
    <location>
        <position position="699"/>
    </location>
</feature>
<feature type="sequence variant" id="VAR_072810" description="Found in patient with putative diagnosis of PEX; uncertain significance; loss-of-function mutation; localization comparable to wild-type; dbSNP:rs1555513103." evidence="36">
    <original>E</original>
    <variation>G</variation>
    <location>
        <position position="709"/>
    </location>
</feature>
<feature type="sequence variant" id="VAR_067867" description="In dbSNP:rs58073789." evidence="25">
    <original>R</original>
    <variation>K</variation>
    <location>
        <position position="724"/>
    </location>
</feature>
<feature type="sequence variant" id="VAR_067868" evidence="28">
    <original>R</original>
    <variation>L</variation>
    <location>
        <position position="724"/>
    </location>
</feature>
<feature type="sequence variant" id="VAR_067869" description="In PXE; affects protein expression and trafficking; expression is reduced to less than 10%, when compared with the WT protein; dbSNP:rs72653785." evidence="26 28 37">
    <original>L</original>
    <variation>P</variation>
    <location>
        <position position="726"/>
    </location>
</feature>
<feature type="sequence variant" id="VAR_067870" description="In dbSNP:rs59593133." evidence="25 28">
    <original>I</original>
    <variation>V</variation>
    <location>
        <position position="742"/>
    </location>
</feature>
<feature type="sequence variant" id="VAR_067871" description="In PXE; dbSNP:rs72653786." evidence="26">
    <original>M</original>
    <variation>K</variation>
    <location>
        <position position="751"/>
    </location>
</feature>
<feature type="sequence variant" id="VAR_067872" description="In PXE; does not change protein biosynthesis and folding; dbSNP:rs72653787." evidence="26 37">
    <original>G</original>
    <variation>R</variation>
    <location>
        <position position="755"/>
    </location>
</feature>
<feature type="sequence variant" id="VAR_067873" description="In PXE; protein level is 15-20% that of the WT proteins; maturation of glycan chains is not affected indicating normal trafficking from the endoplasmic reticulum to the cell membrane; dbSNP:rs72653788." evidence="25 26 37">
    <original>R</original>
    <variation>W</variation>
    <location>
        <position position="760"/>
    </location>
</feature>
<feature type="sequence variant" id="VAR_013378" description="In PXE; affects protein expression and trafficking; expression is reduced to less than 10%, when compared with the WT protein; dbSNP:rs67561842." evidence="15 25 26 29 37">
    <original>R</original>
    <variation>Q</variation>
    <location>
        <position position="765"/>
    </location>
</feature>
<feature type="sequence variant" id="VAR_067874" description="In PXE; affects protein expression and trafficking; expression is reduced to less than 10%, when compared with the WT protein; dbSNP:rs72653789." evidence="21 37">
    <original>A</original>
    <variation>D</variation>
    <location>
        <position position="766"/>
    </location>
</feature>
<feature type="sequence variant" id="VAR_067875" description="In PXE; affects protein expression and trafficking; affects protein expression and trafficking; expression is reduced to less than 10%, when compared with the WT protein; dbSNP:rs72653790." evidence="26 37">
    <original>D</original>
    <variation>N</variation>
    <location>
        <position position="777"/>
    </location>
</feature>
<feature type="sequence variant" id="VAR_067876" description="In PXE; dbSNP:rs72653794." evidence="25">
    <original>R</original>
    <variation>Q</variation>
    <location>
        <position position="807"/>
    </location>
</feature>
<feature type="sequence variant" id="VAR_067877" description="In PXE; dbSNP:rs72653793." evidence="25">
    <original>R</original>
    <variation>W</variation>
    <location>
        <position position="807"/>
    </location>
</feature>
<feature type="sequence variant" id="VAR_067878" description="In PXE; protein level is 15-20% that of the WT proteins; maturation of glycan chains is not affected indicating normal trafficking from the endoplasmic reticulum to the cell membrane; dbSNP:rs72653795." evidence="23 37">
    <original>V</original>
    <variation>M</variation>
    <location>
        <position position="810"/>
    </location>
</feature>
<feature type="sequence variant" id="VAR_067879" description="In PXE; protein level is 15-20% that of the WT proteins; maturation of glycan chains is not affected indicating normal trafficking from the endoplasmic reticulum to the cell membrane; dbSNP:rs72653796." evidence="26 37">
    <original>T</original>
    <variation>M</variation>
    <location>
        <position position="811"/>
    </location>
</feature>
<feature type="sequence variant" id="VAR_067880" description="In PXE; affects protein expression and trafficking; dbSNP:rs72653797." evidence="23 37">
    <original>A</original>
    <variation>P</variation>
    <location>
        <position position="820"/>
    </location>
</feature>
<feature type="sequence variant" id="VAR_072811" description="Found in patient with putative diagnosis of PEX; uncertain significance; loss-of-function mutation; localization comparable to wild-type; dbSNP:rs1355752953." evidence="36">
    <original>M</original>
    <variation>T</variation>
    <location>
        <position position="834"/>
    </location>
</feature>
<feature type="sequence variant" id="VAR_059108" description="In dbSNP:rs6416668." evidence="7 8 24 28 30 39">
    <original>M</original>
    <variation>V</variation>
    <location>
        <position position="848"/>
    </location>
</feature>
<feature type="sequence variant" id="VAR_067881" description="In PXE; dbSNP:rs72653800." evidence="26">
    <original>R</original>
    <variation>S</variation>
    <location>
        <position position="881"/>
    </location>
</feature>
<feature type="sequence variant" id="VAR_067882" description="In PXE; dbSNP:rs72653801." evidence="26">
    <original>T</original>
    <variation>I</variation>
    <location>
        <position position="944"/>
    </location>
</feature>
<feature type="sequence variant" id="VAR_067883" description="In dbSNP:rs61340537." evidence="25 28">
    <original>L</original>
    <variation>I</variation>
    <location>
        <position position="946"/>
    </location>
</feature>
<feature type="sequence variant" id="VAR_072812" description="Found in patient with putative diagnosis of PEX; uncertain significance; loss-of-function mutation; localization comparable to wild-type; dbSNP:rs1555510407." evidence="36">
    <original>L</original>
    <variation>P</variation>
    <location>
        <position position="948"/>
    </location>
</feature>
<feature type="sequence variant" id="VAR_067884" description="In PXE; dbSNP:rs72657689." evidence="26">
    <original>A</original>
    <variation>T</variation>
    <location>
        <position position="950"/>
    </location>
</feature>
<feature type="sequence variant" id="VAR_013379" description="In dbSNP:rs72657700." evidence="15">
    <original>L</original>
    <variation>H</variation>
    <location>
        <position position="953"/>
    </location>
</feature>
<feature type="sequence variant" id="VAR_067885" description="In PXE; dbSNP:rs72657692." evidence="26">
    <original>G</original>
    <variation>R</variation>
    <location>
        <position position="992"/>
    </location>
</feature>
<feature type="sequence variant" id="VAR_067886" description="In GACI2 and PXE; dbSNP:rs72664230." evidence="25 31">
    <location>
        <position position="1036"/>
    </location>
</feature>
<feature type="sequence variant" id="VAR_067887" description="In PXE." evidence="25">
    <location>
        <position position="1048"/>
    </location>
</feature>
<feature type="sequence variant" id="VAR_067888" description="In PXE; dbSNP:rs72657694." evidence="25">
    <original>D</original>
    <variation>E</variation>
    <location>
        <position position="1056"/>
    </location>
</feature>
<feature type="sequence variant" id="VAR_067889" description="In dbSNP:rs41278174." evidence="25">
    <original>R</original>
    <variation>W</variation>
    <location>
        <position position="1064"/>
    </location>
</feature>
<feature type="sequence variant" id="VAR_060988" description="In dbSNP:rs60707953.">
    <original>L</original>
    <variation>I</variation>
    <location>
        <position position="1097"/>
    </location>
</feature>
<feature type="sequence variant" id="VAR_067890" description="In GACI2 and PXE; dbSNP:rs63749794." evidence="23 25 26 31">
    <original>R</original>
    <variation>C</variation>
    <location>
        <position position="1114"/>
    </location>
</feature>
<feature type="sequence variant" id="VAR_011491" description="In PXE; dbSNP:rs63750427." evidence="10 15">
    <original>R</original>
    <variation>P</variation>
    <location>
        <position position="1114"/>
    </location>
</feature>
<feature type="sequence variant" id="VAR_067891" description="In PXE; dbSNP:rs63750987." evidence="25">
    <original>S</original>
    <variation>L</variation>
    <location>
        <position position="1121"/>
    </location>
</feature>
<feature type="sequence variant" id="VAR_013380" description="In PXE; dbSNP:rs63750987." evidence="15">
    <original>S</original>
    <variation>W</variation>
    <location>
        <position position="1121"/>
    </location>
</feature>
<feature type="sequence variant" id="VAR_067892" description="In PXE; dbSNP:rs63750459." evidence="21 23 26">
    <original>T</original>
    <variation>M</variation>
    <location>
        <position position="1130"/>
    </location>
</feature>
<feature type="sequence variant" id="VAR_067893" description="In PXE; dbSNP:rs63750473." evidence="26">
    <original>G</original>
    <variation>A</variation>
    <location>
        <position position="1133"/>
    </location>
</feature>
<feature type="sequence variant" id="VAR_013381" description="In PXE; dbSNP:rs60791294." evidence="15">
    <original>R</original>
    <variation>P</variation>
    <location>
        <position position="1138"/>
    </location>
</feature>
<feature type="sequence variant" id="VAR_011492" description="In PXE; dbSNP:rs60791294." evidence="10 15 23 25 26 28">
    <original>R</original>
    <variation>Q</variation>
    <location>
        <position position="1138"/>
    </location>
</feature>
<feature type="sequence variant" id="VAR_011493" description="In PXE; dbSNP:rs28939701." evidence="9 25 26">
    <original>R</original>
    <variation>W</variation>
    <location>
        <position position="1138"/>
    </location>
</feature>
<feature type="sequence variant" id="VAR_067894" description="In PXE; dbSNP:rs63750146." evidence="26">
    <original>A</original>
    <variation>T</variation>
    <location>
        <position position="1139"/>
    </location>
</feature>
<feature type="sequence variant" id="VAR_067895" description="In PXE; dbSNP:rs63750457." evidence="25 26">
    <original>R</original>
    <variation>Q</variation>
    <location>
        <position position="1164"/>
    </location>
</feature>
<feature type="sequence variant" id="VAR_013382" description="In PXE; dbSNP:rs63750607." evidence="15">
    <original>G</original>
    <variation>D</variation>
    <location>
        <position position="1203"/>
    </location>
</feature>
<feature type="sequence variant" id="VAR_067896" description="In PXE; dbSNP:rs63751215." evidence="25 26">
    <original>R</original>
    <variation>C</variation>
    <location>
        <position position="1221"/>
    </location>
</feature>
<feature type="sequence variant" id="VAR_067897" description="In GACI2; dbSNP:rs63751001." evidence="26 31">
    <original>R</original>
    <variation>H</variation>
    <location>
        <position position="1221"/>
    </location>
</feature>
<feature type="sequence variant" id="VAR_067898" description="In PXE; dbSNP:rs63750125." evidence="26">
    <original>L</original>
    <variation>I</variation>
    <location>
        <position position="1226"/>
    </location>
</feature>
<feature type="sequence variant" id="VAR_067899" description="In PXE; dbSNP:rs63750402." evidence="25">
    <original>R</original>
    <variation>W</variation>
    <location>
        <position position="1235"/>
    </location>
</feature>
<feature type="sequence variant" id="VAR_067900" description="In PXE; pseudodominant; dbSNP:rs63749796." evidence="21">
    <original>D</original>
    <variation>H</variation>
    <location>
        <position position="1238"/>
    </location>
</feature>
<feature type="sequence variant" id="VAR_013383" description="In dbSNP:rs72657701." evidence="15">
    <original>W</original>
    <variation>C</variation>
    <location>
        <position position="1241"/>
    </location>
</feature>
<feature type="sequence variant" id="VAR_011494" description="Associated with lower plasma triglycerides and higher plasma HDL cholesterol; dbSNP:rs2238472." evidence="9 11 15 17 25 27">
    <original>R</original>
    <variation>Q</variation>
    <location>
        <position position="1268"/>
    </location>
</feature>
<feature type="sequence variant" id="VAR_013384" description="In PXE; abolishes LTC4 and NEM-GS transport; does not affect plasma membrane localization; does not increase extracellular pyrophosphate levels; dbSNP:rs63751325." evidence="15 18 26 34">
    <original>V</original>
    <variation>F</variation>
    <location>
        <position position="1298"/>
    </location>
</feature>
<feature type="sequence variant" id="VAR_013385" description="In PXE; dbSNP:rs63750494." evidence="15">
    <original>T</original>
    <variation>I</variation>
    <location>
        <position position="1301"/>
    </location>
</feature>
<feature type="sequence variant" id="VAR_013386" description="In PXE; abolishes LTC4 and NEM-GS transport; dbSNP:rs63749856." evidence="15 18 25 26 28">
    <original>G</original>
    <variation>R</variation>
    <location>
        <position position="1302"/>
    </location>
</feature>
<feature type="sequence variant" id="VAR_013387" description="In PXE; dbSNP:rs63750410." evidence="15 25 26">
    <original>A</original>
    <variation>P</variation>
    <location>
        <position position="1303"/>
    </location>
</feature>
<feature type="sequence variant" id="VAR_013388" description="In PXE; dbSNP:rs63751086." evidence="15 25 26">
    <original>R</original>
    <variation>Q</variation>
    <location>
        <position position="1314"/>
    </location>
</feature>
<feature type="sequence variant" id="VAR_011495" description="In GACI2 and PXE; dbSNP:rs63750759." evidence="10 15 26 31">
    <original>R</original>
    <variation>W</variation>
    <location>
        <position position="1314"/>
    </location>
</feature>
<feature type="sequence variant" id="VAR_013389" description="In PXE; abolishes LTC4 and NEM-GS transport; dbSNP:rs63749823." evidence="15 18">
    <original>G</original>
    <variation>S</variation>
    <location>
        <position position="1321"/>
    </location>
</feature>
<feature type="sequence variant" id="VAR_067901" description="In PXE; dbSNP:rs63750414." evidence="21 28">
    <original>L</original>
    <variation>P</variation>
    <location>
        <position position="1335"/>
    </location>
</feature>
<feature type="sequence variant" id="VAR_067902" description="In PXE; dbSNP:rs63750414." evidence="26">
    <original>L</original>
    <variation>Q</variation>
    <location>
        <position position="1335"/>
    </location>
</feature>
<feature type="sequence variant" id="VAR_013390" description="In PXE; dbSNP:rs28939702." evidence="12 15 23 25 26 28">
    <original>R</original>
    <variation>C</variation>
    <location>
        <position position="1339"/>
    </location>
</feature>
<feature type="sequence variant" id="VAR_067904" description="In PXE; dbSNP:rs63750622." evidence="26">
    <original>R</original>
    <variation>H</variation>
    <location>
        <position position="1339"/>
    </location>
</feature>
<feature type="sequence variant" id="VAR_067903" description="In PXE; dbSNP:rs63750622." evidence="25">
    <original>R</original>
    <variation>L</variation>
    <location>
        <position position="1339"/>
    </location>
</feature>
<feature type="sequence variant" id="VAR_067905" description="In PXE; dbSNP:rs63751112." evidence="23">
    <original>P</original>
    <variation>S</variation>
    <location>
        <position position="1346"/>
    </location>
</feature>
<feature type="sequence variant" id="VAR_013391" description="In PXE; dbSNP:rs63751111." evidence="15">
    <original>Q</original>
    <variation>H</variation>
    <location>
        <position position="1347"/>
    </location>
</feature>
<feature type="sequence variant" id="VAR_013392" description="In PXE; dbSNP:rs63750018." evidence="16">
    <original>G</original>
    <variation>R</variation>
    <location>
        <position position="1354"/>
    </location>
</feature>
<feature type="sequence variant" id="VAR_067906" description="In PXE; dbSNP:rs63750428." evidence="25">
    <original>R</original>
    <variation>W</variation>
    <location>
        <position position="1357"/>
    </location>
</feature>
<feature type="sequence variant" id="VAR_013393" description="In PXE; dbSNP:rs58695352." evidence="15">
    <original>D</original>
    <variation>N</variation>
    <location>
        <position position="1361"/>
    </location>
</feature>
<feature type="sequence variant" id="VAR_067907" description="In PXE; dbSNP:rs63751241." evidence="21 23">
    <original>E</original>
    <variation>K</variation>
    <location>
        <position position="1400"/>
    </location>
</feature>
<feature type="sequence variant" id="VAR_067908" description="In PXE; dbSNP:rs387906859." evidence="29">
    <original>Q</original>
    <variation>K</variation>
    <location>
        <position position="1406"/>
    </location>
</feature>
<feature type="sequence variant" id="VAR_013394" description="In PXE; dbSNP:rs63750295." evidence="15">
    <original>I</original>
    <variation>T</variation>
    <location>
        <position position="1424"/>
    </location>
</feature>
<feature type="sequence variant" id="VAR_072813" description="Found in patient with putative diagnosis of PEX; uncertain significance; dbSNP:rs1462269230." evidence="36">
    <original>A</original>
    <variation>T</variation>
    <location>
        <position position="1442"/>
    </location>
</feature>
<feature type="sequence variant" id="VAR_067909" description="In PXE; putative autosomal dominant; dbSNP:rs72547524." evidence="22">
    <original>R</original>
    <variation>C</variation>
    <location>
        <position position="1459"/>
    </location>
</feature>
<feature type="sequence conflict" description="In Ref. 4; CAO81806." evidence="44" ref="4">
    <original>E</original>
    <variation>Q</variation>
    <location>
        <position position="6"/>
    </location>
</feature>
<feature type="sequence conflict" description="In Ref. 1; AAD51293." evidence="44" ref="1">
    <original>L</original>
    <variation>P</variation>
    <location>
        <position position="377"/>
    </location>
</feature>
<feature type="sequence conflict" description="In Ref. 4; CAO81806." evidence="44" ref="4">
    <original>R</original>
    <variation>K</variation>
    <location>
        <position position="401"/>
    </location>
</feature>
<feature type="sequence conflict" description="In Ref. 4; CAO81806." evidence="44" ref="4">
    <original>L</original>
    <variation>P</variation>
    <location>
        <position position="986"/>
    </location>
</feature>
<feature type="sequence conflict" description="In Ref. 1; AAD51293." evidence="44" ref="1">
    <original>Y</original>
    <variation>C</variation>
    <location>
        <position position="1274"/>
    </location>
</feature>
<feature type="sequence conflict" description="In Ref. 1; AAD51293." evidence="44" ref="1">
    <original>L</original>
    <variation>P</variation>
    <location>
        <position position="1455"/>
    </location>
</feature>
<feature type="strand" evidence="55">
    <location>
        <begin position="627"/>
        <end position="639"/>
    </location>
</feature>
<feature type="strand" evidence="55">
    <location>
        <begin position="645"/>
        <end position="654"/>
    </location>
</feature>
<feature type="strand" evidence="55">
    <location>
        <begin position="658"/>
        <end position="662"/>
    </location>
</feature>
<feature type="helix" evidence="55">
    <location>
        <begin position="669"/>
        <end position="676"/>
    </location>
</feature>
<feature type="strand" evidence="55">
    <location>
        <begin position="680"/>
        <end position="689"/>
    </location>
</feature>
<feature type="strand" evidence="55">
    <location>
        <begin position="693"/>
        <end position="696"/>
    </location>
</feature>
<feature type="strand" evidence="55">
    <location>
        <begin position="704"/>
        <end position="706"/>
    </location>
</feature>
<feature type="helix" evidence="55">
    <location>
        <begin position="707"/>
        <end position="712"/>
    </location>
</feature>
<feature type="helix" evidence="55">
    <location>
        <begin position="719"/>
        <end position="728"/>
    </location>
</feature>
<feature type="helix" evidence="55">
    <location>
        <begin position="732"/>
        <end position="737"/>
    </location>
</feature>
<feature type="strand" evidence="56">
    <location>
        <begin position="738"/>
        <end position="740"/>
    </location>
</feature>
<feature type="helix" evidence="55">
    <location>
        <begin position="741"/>
        <end position="743"/>
    </location>
</feature>
<feature type="strand" evidence="55">
    <location>
        <begin position="745"/>
        <end position="751"/>
    </location>
</feature>
<feature type="helix" evidence="55">
    <location>
        <begin position="755"/>
        <end position="768"/>
    </location>
</feature>
<feature type="strand" evidence="55">
    <location>
        <begin position="772"/>
        <end position="778"/>
    </location>
</feature>
<feature type="strand" evidence="55">
    <location>
        <begin position="781"/>
        <end position="783"/>
    </location>
</feature>
<feature type="helix" evidence="55">
    <location>
        <begin position="785"/>
        <end position="795"/>
    </location>
</feature>
<feature type="turn" evidence="55">
    <location>
        <begin position="801"/>
        <end position="804"/>
    </location>
</feature>
<feature type="strand" evidence="55">
    <location>
        <begin position="805"/>
        <end position="810"/>
    </location>
</feature>
<feature type="helix" evidence="55">
    <location>
        <begin position="817"/>
        <end position="819"/>
    </location>
</feature>
<feature type="strand" evidence="55">
    <location>
        <begin position="820"/>
        <end position="827"/>
    </location>
</feature>
<feature type="strand" evidence="55">
    <location>
        <begin position="830"/>
        <end position="835"/>
    </location>
</feature>
<feature type="helix" evidence="55">
    <location>
        <begin position="837"/>
        <end position="842"/>
    </location>
</feature>
<feature type="helix" evidence="55">
    <location>
        <begin position="846"/>
        <end position="852"/>
    </location>
</feature>
<feature type="strand" evidence="54">
    <location>
        <begin position="1265"/>
        <end position="1272"/>
    </location>
</feature>
<feature type="strand" evidence="57">
    <location>
        <begin position="1274"/>
        <end position="1278"/>
    </location>
</feature>
<feature type="strand" evidence="54">
    <location>
        <begin position="1281"/>
        <end position="1289"/>
    </location>
</feature>
<feature type="strand" evidence="54">
    <location>
        <begin position="1294"/>
        <end position="1298"/>
    </location>
</feature>
<feature type="helix" evidence="54">
    <location>
        <begin position="1305"/>
        <end position="1312"/>
    </location>
</feature>
<feature type="strand" evidence="54">
    <location>
        <begin position="1319"/>
        <end position="1325"/>
    </location>
</feature>
<feature type="helix" evidence="54">
    <location>
        <begin position="1330"/>
        <end position="1332"/>
    </location>
</feature>
<feature type="helix" evidence="54">
    <location>
        <begin position="1335"/>
        <end position="1340"/>
    </location>
</feature>
<feature type="strand" evidence="54">
    <location>
        <begin position="1342"/>
        <end position="1345"/>
    </location>
</feature>
<feature type="strand" evidence="54">
    <location>
        <begin position="1353"/>
        <end position="1355"/>
    </location>
</feature>
<feature type="helix" evidence="54">
    <location>
        <begin position="1356"/>
        <end position="1360"/>
    </location>
</feature>
<feature type="helix" evidence="54">
    <location>
        <begin position="1368"/>
        <end position="1377"/>
    </location>
</feature>
<feature type="helix" evidence="54">
    <location>
        <begin position="1381"/>
        <end position="1386"/>
    </location>
</feature>
<feature type="strand" evidence="54">
    <location>
        <begin position="1387"/>
        <end position="1389"/>
    </location>
</feature>
<feature type="helix" evidence="54">
    <location>
        <begin position="1390"/>
        <end position="1392"/>
    </location>
</feature>
<feature type="helix" evidence="54">
    <location>
        <begin position="1404"/>
        <end position="1417"/>
    </location>
</feature>
<feature type="strand" evidence="54">
    <location>
        <begin position="1421"/>
        <end position="1426"/>
    </location>
</feature>
<feature type="strand" evidence="57">
    <location>
        <begin position="1430"/>
        <end position="1432"/>
    </location>
</feature>
<feature type="helix" evidence="54">
    <location>
        <begin position="1434"/>
        <end position="1444"/>
    </location>
</feature>
<feature type="turn" evidence="54">
    <location>
        <begin position="1445"/>
        <end position="1450"/>
    </location>
</feature>
<feature type="strand" evidence="54">
    <location>
        <begin position="1451"/>
        <end position="1459"/>
    </location>
</feature>
<feature type="helix" evidence="54">
    <location>
        <begin position="1460"/>
        <end position="1463"/>
    </location>
</feature>
<feature type="strand" evidence="54">
    <location>
        <begin position="1464"/>
        <end position="1473"/>
    </location>
</feature>
<feature type="strand" evidence="54">
    <location>
        <begin position="1476"/>
        <end position="1481"/>
    </location>
</feature>
<feature type="helix" evidence="54">
    <location>
        <begin position="1483"/>
        <end position="1488"/>
    </location>
</feature>
<feature type="helix" evidence="54">
    <location>
        <begin position="1492"/>
        <end position="1499"/>
    </location>
</feature>
<gene>
    <name type="primary">ABCC6</name>
    <name type="synonym">ARA</name>
    <name type="synonym">MRP6</name>
</gene>
<dbReference type="EC" id="7.6.2.-" evidence="2"/>
<dbReference type="EC" id="7.6.2.3" evidence="18 19"/>
<dbReference type="EMBL" id="AF168791">
    <property type="protein sequence ID" value="AAD51293.1"/>
    <property type="molecule type" value="mRNA"/>
</dbReference>
<dbReference type="EMBL" id="AF076622">
    <property type="protein sequence ID" value="AAC79696.1"/>
    <property type="molecule type" value="mRNA"/>
</dbReference>
<dbReference type="EMBL" id="AY078405">
    <property type="protein sequence ID" value="AAL83711.1"/>
    <property type="molecule type" value="mRNA"/>
</dbReference>
<dbReference type="EMBL" id="AM711638">
    <property type="protein sequence ID" value="CAN84639.1"/>
    <property type="molecule type" value="mRNA"/>
</dbReference>
<dbReference type="EMBL" id="AM774324">
    <property type="protein sequence ID" value="CAO81806.1"/>
    <property type="molecule type" value="mRNA"/>
</dbReference>
<dbReference type="EMBL" id="U91318">
    <property type="protein sequence ID" value="AAC15785.1"/>
    <property type="status" value="ALT_SEQ"/>
    <property type="molecule type" value="Genomic_DNA"/>
</dbReference>
<dbReference type="EMBL" id="AC136624">
    <property type="status" value="NOT_ANNOTATED_CDS"/>
    <property type="molecule type" value="Genomic_DNA"/>
</dbReference>
<dbReference type="EMBL" id="BC050733">
    <property type="protein sequence ID" value="AAH50733.1"/>
    <property type="molecule type" value="mRNA"/>
</dbReference>
<dbReference type="EMBL" id="BC131732">
    <property type="protein sequence ID" value="AAI31733.1"/>
    <property type="molecule type" value="mRNA"/>
</dbReference>
<dbReference type="CCDS" id="CCDS10568.1">
    <molecule id="O95255-1"/>
</dbReference>
<dbReference type="CCDS" id="CCDS58430.1">
    <molecule id="O95255-2"/>
</dbReference>
<dbReference type="RefSeq" id="NP_001072996.1">
    <molecule id="O95255-2"/>
    <property type="nucleotide sequence ID" value="NM_001079528.4"/>
</dbReference>
<dbReference type="RefSeq" id="NP_001162.4">
    <molecule id="O95255-1"/>
    <property type="nucleotide sequence ID" value="NM_001171.5"/>
</dbReference>
<dbReference type="PDB" id="6BZR">
    <property type="method" value="X-ray"/>
    <property type="resolution" value="2.80 A"/>
    <property type="chains" value="A/B=1254-1503"/>
</dbReference>
<dbReference type="PDB" id="6BZS">
    <property type="method" value="X-ray"/>
    <property type="resolution" value="2.30 A"/>
    <property type="chains" value="A=622-859"/>
</dbReference>
<dbReference type="PDB" id="6NLO">
    <property type="method" value="X-ray"/>
    <property type="resolution" value="2.85 A"/>
    <property type="chains" value="A=622-859"/>
</dbReference>
<dbReference type="PDB" id="6P7F">
    <property type="method" value="X-ray"/>
    <property type="resolution" value="2.85 A"/>
    <property type="chains" value="A=1254-1503"/>
</dbReference>
<dbReference type="PDBsum" id="6BZR"/>
<dbReference type="PDBsum" id="6BZS"/>
<dbReference type="PDBsum" id="6NLO"/>
<dbReference type="PDBsum" id="6P7F"/>
<dbReference type="SMR" id="O95255"/>
<dbReference type="BioGRID" id="106863">
    <property type="interactions" value="53"/>
</dbReference>
<dbReference type="FunCoup" id="O95255">
    <property type="interactions" value="66"/>
</dbReference>
<dbReference type="IntAct" id="O95255">
    <property type="interactions" value="10"/>
</dbReference>
<dbReference type="STRING" id="9606.ENSP00000205557"/>
<dbReference type="ChEMBL" id="CHEMBL2073661"/>
<dbReference type="DrugBank" id="DB00171">
    <property type="generic name" value="ATP"/>
</dbReference>
<dbReference type="DrugBank" id="DB00515">
    <property type="generic name" value="Cisplatin"/>
</dbReference>
<dbReference type="DrugBank" id="DB00970">
    <property type="generic name" value="Dactinomycin"/>
</dbReference>
<dbReference type="DrugBank" id="DB00694">
    <property type="generic name" value="Daunorubicin"/>
</dbReference>
<dbReference type="DrugBank" id="DB00997">
    <property type="generic name" value="Doxorubicin"/>
</dbReference>
<dbReference type="DrugBank" id="DB00773">
    <property type="generic name" value="Etoposide"/>
</dbReference>
<dbReference type="DrugBank" id="DB00328">
    <property type="generic name" value="Indomethacin"/>
</dbReference>
<dbReference type="DrugBank" id="DB01032">
    <property type="generic name" value="Probenecid"/>
</dbReference>
<dbReference type="DrugBank" id="DB01138">
    <property type="generic name" value="Sulfinpyrazone"/>
</dbReference>
<dbReference type="DrugBank" id="DB00444">
    <property type="generic name" value="Teniposide"/>
</dbReference>
<dbReference type="DrugBank" id="DB00570">
    <property type="generic name" value="Vinblastine"/>
</dbReference>
<dbReference type="DrugCentral" id="O95255"/>
<dbReference type="TCDB" id="3.A.1.208.10">
    <property type="family name" value="the atp-binding cassette (abc) superfamily"/>
</dbReference>
<dbReference type="GlyCosmos" id="O95255">
    <property type="glycosylation" value="1 site, No reported glycans"/>
</dbReference>
<dbReference type="GlyGen" id="O95255">
    <property type="glycosylation" value="2 sites, 1 O-linked glycan (1 site)"/>
</dbReference>
<dbReference type="iPTMnet" id="O95255"/>
<dbReference type="PhosphoSitePlus" id="O95255"/>
<dbReference type="BioMuta" id="ABCC6"/>
<dbReference type="jPOST" id="O95255"/>
<dbReference type="MassIVE" id="O95255"/>
<dbReference type="PaxDb" id="9606-ENSP00000205557"/>
<dbReference type="PeptideAtlas" id="O95255"/>
<dbReference type="ProteomicsDB" id="18076"/>
<dbReference type="ProteomicsDB" id="50749">
    <molecule id="O95255-1"/>
</dbReference>
<dbReference type="Antibodypedia" id="11866">
    <property type="antibodies" value="167 antibodies from 32 providers"/>
</dbReference>
<dbReference type="DNASU" id="368"/>
<dbReference type="Ensembl" id="ENST00000205557.12">
    <molecule id="O95255-1"/>
    <property type="protein sequence ID" value="ENSP00000205557.7"/>
    <property type="gene ID" value="ENSG00000091262.17"/>
</dbReference>
<dbReference type="Ensembl" id="ENST00000456970.6">
    <molecule id="O95255-3"/>
    <property type="protein sequence ID" value="ENSP00000405002.2"/>
    <property type="gene ID" value="ENSG00000091262.17"/>
</dbReference>
<dbReference type="Ensembl" id="ENST00000575728.1">
    <molecule id="O95255-2"/>
    <property type="protein sequence ID" value="ENSP00000461686.1"/>
    <property type="gene ID" value="ENSG00000091262.17"/>
</dbReference>
<dbReference type="Ensembl" id="ENST00000600761.3">
    <molecule id="O95255-2"/>
    <property type="protein sequence ID" value="ENSP00000481979.2"/>
    <property type="gene ID" value="ENSG00000275331.5"/>
</dbReference>
<dbReference type="GeneID" id="368"/>
<dbReference type="KEGG" id="hsa:368"/>
<dbReference type="MANE-Select" id="ENST00000205557.12">
    <property type="protein sequence ID" value="ENSP00000205557.7"/>
    <property type="RefSeq nucleotide sequence ID" value="NM_001171.6"/>
    <property type="RefSeq protein sequence ID" value="NP_001162.5"/>
</dbReference>
<dbReference type="UCSC" id="uc002den.5">
    <molecule id="O95255-1"/>
    <property type="organism name" value="human"/>
</dbReference>
<dbReference type="AGR" id="HGNC:57"/>
<dbReference type="CTD" id="368"/>
<dbReference type="DisGeNET" id="368"/>
<dbReference type="GeneCards" id="ABCC6"/>
<dbReference type="GeneReviews" id="ABCC6"/>
<dbReference type="HGNC" id="HGNC:57">
    <property type="gene designation" value="ABCC6"/>
</dbReference>
<dbReference type="HPA" id="ENSG00000091262">
    <property type="expression patterns" value="Tissue enhanced (kidney, liver)"/>
</dbReference>
<dbReference type="MalaCards" id="ABCC6"/>
<dbReference type="MIM" id="264800">
    <property type="type" value="phenotype"/>
</dbReference>
<dbReference type="MIM" id="603234">
    <property type="type" value="gene"/>
</dbReference>
<dbReference type="MIM" id="614473">
    <property type="type" value="phenotype"/>
</dbReference>
<dbReference type="neXtProt" id="NX_O95255"/>
<dbReference type="OpenTargets" id="ENSG00000091262"/>
<dbReference type="Orphanet" id="51608">
    <property type="disease" value="Generalized arterial calcification of infancy"/>
</dbReference>
<dbReference type="Orphanet" id="758">
    <property type="disease" value="Pseudoxanthoma elasticum"/>
</dbReference>
<dbReference type="PharmGKB" id="PA58"/>
<dbReference type="VEuPathDB" id="HostDB:ENSG00000091262"/>
<dbReference type="eggNOG" id="KOG0054">
    <property type="taxonomic scope" value="Eukaryota"/>
</dbReference>
<dbReference type="GeneTree" id="ENSGT00940000157145"/>
<dbReference type="HOGENOM" id="CLU_000604_27_3_1"/>
<dbReference type="InParanoid" id="O95255"/>
<dbReference type="OMA" id="VAQNDTH"/>
<dbReference type="OrthoDB" id="6500128at2759"/>
<dbReference type="PAN-GO" id="O95255">
    <property type="GO annotations" value="3 GO annotations based on evolutionary models"/>
</dbReference>
<dbReference type="PhylomeDB" id="O95255"/>
<dbReference type="TreeFam" id="TF105199"/>
<dbReference type="BRENDA" id="7.6.2.3">
    <property type="organism ID" value="2681"/>
</dbReference>
<dbReference type="PathwayCommons" id="O95255"/>
<dbReference type="Reactome" id="R-HSA-382556">
    <property type="pathway name" value="ABC-family proteins mediated transport"/>
</dbReference>
<dbReference type="Reactome" id="R-HSA-5690338">
    <property type="pathway name" value="Defective ABCC6 causes PXE"/>
</dbReference>
<dbReference type="SignaLink" id="O95255"/>
<dbReference type="SIGNOR" id="O95255"/>
<dbReference type="BioGRID-ORCS" id="368">
    <property type="hits" value="30 hits in 1142 CRISPR screens"/>
</dbReference>
<dbReference type="ChiTaRS" id="ABCC6">
    <property type="organism name" value="human"/>
</dbReference>
<dbReference type="GeneWiki" id="ABCC6"/>
<dbReference type="GenomeRNAi" id="368"/>
<dbReference type="Pharos" id="O95255">
    <property type="development level" value="Tbio"/>
</dbReference>
<dbReference type="PRO" id="PR:O95255"/>
<dbReference type="Proteomes" id="UP000005640">
    <property type="component" value="Chromosome 16"/>
</dbReference>
<dbReference type="RNAct" id="O95255">
    <property type="molecule type" value="protein"/>
</dbReference>
<dbReference type="Bgee" id="ENSG00000091262">
    <property type="expression patterns" value="Expressed in right lobe of liver and 98 other cell types or tissues"/>
</dbReference>
<dbReference type="ExpressionAtlas" id="O95255">
    <property type="expression patterns" value="baseline and differential"/>
</dbReference>
<dbReference type="GO" id="GO:0009925">
    <property type="term" value="C:basal plasma membrane"/>
    <property type="evidence" value="ECO:0000314"/>
    <property type="project" value="UniProtKB"/>
</dbReference>
<dbReference type="GO" id="GO:0016323">
    <property type="term" value="C:basolateral plasma membrane"/>
    <property type="evidence" value="ECO:0000314"/>
    <property type="project" value="UniProtKB"/>
</dbReference>
<dbReference type="GO" id="GO:0005789">
    <property type="term" value="C:endoplasmic reticulum membrane"/>
    <property type="evidence" value="ECO:0007669"/>
    <property type="project" value="UniProtKB-SubCell"/>
</dbReference>
<dbReference type="GO" id="GO:0005576">
    <property type="term" value="C:extracellular region"/>
    <property type="evidence" value="ECO:0000314"/>
    <property type="project" value="MGI"/>
</dbReference>
<dbReference type="GO" id="GO:0016020">
    <property type="term" value="C:membrane"/>
    <property type="evidence" value="ECO:0000318"/>
    <property type="project" value="GO_Central"/>
</dbReference>
<dbReference type="GO" id="GO:0005654">
    <property type="term" value="C:nucleoplasm"/>
    <property type="evidence" value="ECO:0000314"/>
    <property type="project" value="HPA"/>
</dbReference>
<dbReference type="GO" id="GO:0005886">
    <property type="term" value="C:plasma membrane"/>
    <property type="evidence" value="ECO:0000314"/>
    <property type="project" value="HPA"/>
</dbReference>
<dbReference type="GO" id="GO:0015431">
    <property type="term" value="F:ABC-type glutathione S-conjugate transporter activity"/>
    <property type="evidence" value="ECO:0000314"/>
    <property type="project" value="UniProtKB"/>
</dbReference>
<dbReference type="GO" id="GO:0005524">
    <property type="term" value="F:ATP binding"/>
    <property type="evidence" value="ECO:0000314"/>
    <property type="project" value="UniProtKB"/>
</dbReference>
<dbReference type="GO" id="GO:0016887">
    <property type="term" value="F:ATP hydrolysis activity"/>
    <property type="evidence" value="ECO:0007669"/>
    <property type="project" value="InterPro"/>
</dbReference>
<dbReference type="GO" id="GO:0043225">
    <property type="term" value="F:ATPase-coupled inorganic anion transmembrane transporter activity"/>
    <property type="evidence" value="ECO:0000304"/>
    <property type="project" value="Reactome"/>
</dbReference>
<dbReference type="GO" id="GO:0042626">
    <property type="term" value="F:ATPase-coupled transmembrane transporter activity"/>
    <property type="evidence" value="ECO:0000314"/>
    <property type="project" value="UniProtKB"/>
</dbReference>
<dbReference type="GO" id="GO:0046034">
    <property type="term" value="P:ATP metabolic process"/>
    <property type="evidence" value="ECO:0000314"/>
    <property type="project" value="MGI"/>
</dbReference>
<dbReference type="GO" id="GO:0015867">
    <property type="term" value="P:ATP transport"/>
    <property type="evidence" value="ECO:0000314"/>
    <property type="project" value="UniProtKB"/>
</dbReference>
<dbReference type="GO" id="GO:0055074">
    <property type="term" value="P:calcium ion homeostasis"/>
    <property type="evidence" value="ECO:0000314"/>
    <property type="project" value="MGI"/>
</dbReference>
<dbReference type="GO" id="GO:0010467">
    <property type="term" value="P:gene expression"/>
    <property type="evidence" value="ECO:0000314"/>
    <property type="project" value="MGI"/>
</dbReference>
<dbReference type="GO" id="GO:0140928">
    <property type="term" value="P:inhibition of non-skeletal tissue mineralization"/>
    <property type="evidence" value="ECO:0007669"/>
    <property type="project" value="Ensembl"/>
</dbReference>
<dbReference type="GO" id="GO:0030505">
    <property type="term" value="P:inorganic diphosphate transport"/>
    <property type="evidence" value="ECO:0007669"/>
    <property type="project" value="Ensembl"/>
</dbReference>
<dbReference type="GO" id="GO:0030643">
    <property type="term" value="P:intracellular phosphate ion homeostasis"/>
    <property type="evidence" value="ECO:0007669"/>
    <property type="project" value="Ensembl"/>
</dbReference>
<dbReference type="GO" id="GO:0071716">
    <property type="term" value="P:leukotriene transport"/>
    <property type="evidence" value="ECO:0000314"/>
    <property type="project" value="UniProtKB"/>
</dbReference>
<dbReference type="GO" id="GO:0055062">
    <property type="term" value="P:phosphate ion homeostasis"/>
    <property type="evidence" value="ECO:0000314"/>
    <property type="project" value="MGI"/>
</dbReference>
<dbReference type="GO" id="GO:0032026">
    <property type="term" value="P:response to magnesium ion"/>
    <property type="evidence" value="ECO:0007669"/>
    <property type="project" value="Ensembl"/>
</dbReference>
<dbReference type="GO" id="GO:1904383">
    <property type="term" value="P:response to sodium phosphate"/>
    <property type="evidence" value="ECO:0007669"/>
    <property type="project" value="Ensembl"/>
</dbReference>
<dbReference type="GO" id="GO:0009410">
    <property type="term" value="P:response to xenobiotic stimulus"/>
    <property type="evidence" value="ECO:0000304"/>
    <property type="project" value="ProtInc"/>
</dbReference>
<dbReference type="GO" id="GO:0055085">
    <property type="term" value="P:transmembrane transport"/>
    <property type="evidence" value="ECO:0000318"/>
    <property type="project" value="GO_Central"/>
</dbReference>
<dbReference type="GO" id="GO:0007601">
    <property type="term" value="P:visual perception"/>
    <property type="evidence" value="ECO:0007669"/>
    <property type="project" value="UniProtKB-KW"/>
</dbReference>
<dbReference type="CDD" id="cd18595">
    <property type="entry name" value="ABC_6TM_MRP1_2_3_6_D1_like"/>
    <property type="match status" value="1"/>
</dbReference>
<dbReference type="CDD" id="cd18603">
    <property type="entry name" value="ABC_6TM_MRP1_2_3_6_D2_like"/>
    <property type="match status" value="1"/>
</dbReference>
<dbReference type="CDD" id="cd03250">
    <property type="entry name" value="ABCC_MRP_domain1"/>
    <property type="match status" value="1"/>
</dbReference>
<dbReference type="CDD" id="cd03244">
    <property type="entry name" value="ABCC_MRP_domain2"/>
    <property type="match status" value="1"/>
</dbReference>
<dbReference type="FunFam" id="3.40.50.300:FF:000450">
    <property type="entry name" value="ABC transporter C family member 2"/>
    <property type="match status" value="1"/>
</dbReference>
<dbReference type="FunFam" id="1.20.1560.10:FF:000032">
    <property type="entry name" value="ATP-binding cassette sub-family C member 6"/>
    <property type="match status" value="1"/>
</dbReference>
<dbReference type="FunFam" id="1.20.1560.10:FF:000001">
    <property type="entry name" value="ATP-binding cassette subfamily C member 1"/>
    <property type="match status" value="1"/>
</dbReference>
<dbReference type="FunFam" id="3.40.50.300:FF:001147">
    <property type="entry name" value="multidrug resistance-associated protein 6 isoform X1"/>
    <property type="match status" value="1"/>
</dbReference>
<dbReference type="Gene3D" id="1.20.1560.10">
    <property type="entry name" value="ABC transporter type 1, transmembrane domain"/>
    <property type="match status" value="2"/>
</dbReference>
<dbReference type="Gene3D" id="3.40.50.300">
    <property type="entry name" value="P-loop containing nucleotide triphosphate hydrolases"/>
    <property type="match status" value="2"/>
</dbReference>
<dbReference type="InterPro" id="IPR003593">
    <property type="entry name" value="AAA+_ATPase"/>
</dbReference>
<dbReference type="InterPro" id="IPR011527">
    <property type="entry name" value="ABC1_TM_dom"/>
</dbReference>
<dbReference type="InterPro" id="IPR036640">
    <property type="entry name" value="ABC1_TM_sf"/>
</dbReference>
<dbReference type="InterPro" id="IPR003439">
    <property type="entry name" value="ABC_transporter-like_ATP-bd"/>
</dbReference>
<dbReference type="InterPro" id="IPR017871">
    <property type="entry name" value="ABC_transporter-like_CS"/>
</dbReference>
<dbReference type="InterPro" id="IPR050173">
    <property type="entry name" value="ABC_transporter_C-like"/>
</dbReference>
<dbReference type="InterPro" id="IPR005292">
    <property type="entry name" value="MRP"/>
</dbReference>
<dbReference type="InterPro" id="IPR027417">
    <property type="entry name" value="P-loop_NTPase"/>
</dbReference>
<dbReference type="InterPro" id="IPR056227">
    <property type="entry name" value="TMD0_ABC"/>
</dbReference>
<dbReference type="NCBIfam" id="TIGR00957">
    <property type="entry name" value="MRP_assoc_pro"/>
    <property type="match status" value="1"/>
</dbReference>
<dbReference type="PANTHER" id="PTHR24223">
    <property type="entry name" value="ATP-BINDING CASSETTE SUB-FAMILY C"/>
    <property type="match status" value="1"/>
</dbReference>
<dbReference type="PANTHER" id="PTHR24223:SF339">
    <property type="entry name" value="ATP-BINDING CASSETTE SUB-FAMILY C MEMBER 6"/>
    <property type="match status" value="1"/>
</dbReference>
<dbReference type="Pfam" id="PF00664">
    <property type="entry name" value="ABC_membrane"/>
    <property type="match status" value="2"/>
</dbReference>
<dbReference type="Pfam" id="PF00005">
    <property type="entry name" value="ABC_tran"/>
    <property type="match status" value="2"/>
</dbReference>
<dbReference type="Pfam" id="PF24357">
    <property type="entry name" value="TMD0_ABC"/>
    <property type="match status" value="1"/>
</dbReference>
<dbReference type="SMART" id="SM00382">
    <property type="entry name" value="AAA"/>
    <property type="match status" value="2"/>
</dbReference>
<dbReference type="SUPFAM" id="SSF90123">
    <property type="entry name" value="ABC transporter transmembrane region"/>
    <property type="match status" value="2"/>
</dbReference>
<dbReference type="SUPFAM" id="SSF52540">
    <property type="entry name" value="P-loop containing nucleoside triphosphate hydrolases"/>
    <property type="match status" value="2"/>
</dbReference>
<dbReference type="PROSITE" id="PS50929">
    <property type="entry name" value="ABC_TM1F"/>
    <property type="match status" value="2"/>
</dbReference>
<dbReference type="PROSITE" id="PS00211">
    <property type="entry name" value="ABC_TRANSPORTER_1"/>
    <property type="match status" value="2"/>
</dbReference>
<dbReference type="PROSITE" id="PS50893">
    <property type="entry name" value="ABC_TRANSPORTER_2"/>
    <property type="match status" value="2"/>
</dbReference>
<name>MRP6_HUMAN</name>
<evidence type="ECO:0000250" key="1"/>
<evidence type="ECO:0000250" key="2">
    <source>
        <dbReference type="UniProtKB" id="O88269"/>
    </source>
</evidence>
<evidence type="ECO:0000255" key="3"/>
<evidence type="ECO:0000255" key="4">
    <source>
        <dbReference type="PROSITE-ProRule" id="PRU00434"/>
    </source>
</evidence>
<evidence type="ECO:0000255" key="5">
    <source>
        <dbReference type="PROSITE-ProRule" id="PRU00441"/>
    </source>
</evidence>
<evidence type="ECO:0000256" key="6">
    <source>
        <dbReference type="SAM" id="MobiDB-lite"/>
    </source>
</evidence>
<evidence type="ECO:0000269" key="7">
    <source>
    </source>
</evidence>
<evidence type="ECO:0000269" key="8">
    <source>
    </source>
</evidence>
<evidence type="ECO:0000269" key="9">
    <source>
    </source>
</evidence>
<evidence type="ECO:0000269" key="10">
    <source>
    </source>
</evidence>
<evidence type="ECO:0000269" key="11">
    <source>
    </source>
</evidence>
<evidence type="ECO:0000269" key="12">
    <source>
    </source>
</evidence>
<evidence type="ECO:0000269" key="13">
    <source>
    </source>
</evidence>
<evidence type="ECO:0000269" key="14">
    <source>
    </source>
</evidence>
<evidence type="ECO:0000269" key="15">
    <source>
    </source>
</evidence>
<evidence type="ECO:0000269" key="16">
    <source>
    </source>
</evidence>
<evidence type="ECO:0000269" key="17">
    <source>
    </source>
</evidence>
<evidence type="ECO:0000269" key="18">
    <source>
    </source>
</evidence>
<evidence type="ECO:0000269" key="19">
    <source>
    </source>
</evidence>
<evidence type="ECO:0000269" key="20">
    <source>
    </source>
</evidence>
<evidence type="ECO:0000269" key="21">
    <source>
    </source>
</evidence>
<evidence type="ECO:0000269" key="22">
    <source>
    </source>
</evidence>
<evidence type="ECO:0000269" key="23">
    <source>
    </source>
</evidence>
<evidence type="ECO:0000269" key="24">
    <source>
    </source>
</evidence>
<evidence type="ECO:0000269" key="25">
    <source>
    </source>
</evidence>
<evidence type="ECO:0000269" key="26">
    <source>
    </source>
</evidence>
<evidence type="ECO:0000269" key="27">
    <source>
    </source>
</evidence>
<evidence type="ECO:0000269" key="28">
    <source>
    </source>
</evidence>
<evidence type="ECO:0000269" key="29">
    <source>
    </source>
</evidence>
<evidence type="ECO:0000269" key="30">
    <source>
    </source>
</evidence>
<evidence type="ECO:0000269" key="31">
    <source>
    </source>
</evidence>
<evidence type="ECO:0000269" key="32">
    <source>
    </source>
</evidence>
<evidence type="ECO:0000269" key="33">
    <source>
    </source>
</evidence>
<evidence type="ECO:0000269" key="34">
    <source>
    </source>
</evidence>
<evidence type="ECO:0000269" key="35">
    <source>
    </source>
</evidence>
<evidence type="ECO:0000269" key="36">
    <source>
    </source>
</evidence>
<evidence type="ECO:0000269" key="37">
    <source>
    </source>
</evidence>
<evidence type="ECO:0000269" key="38">
    <source>
    </source>
</evidence>
<evidence type="ECO:0000269" key="39">
    <source>
    </source>
</evidence>
<evidence type="ECO:0000303" key="40">
    <source>
    </source>
</evidence>
<evidence type="ECO:0000303" key="41">
    <source>
    </source>
</evidence>
<evidence type="ECO:0000303" key="42">
    <source>
    </source>
</evidence>
<evidence type="ECO:0000303" key="43">
    <source>
    </source>
</evidence>
<evidence type="ECO:0000305" key="44"/>
<evidence type="ECO:0000305" key="45">
    <source>
    </source>
</evidence>
<evidence type="ECO:0000305" key="46">
    <source>
    </source>
</evidence>
<evidence type="ECO:0000305" key="47">
    <source>
    </source>
</evidence>
<evidence type="ECO:0000305" key="48">
    <source>
    </source>
</evidence>
<evidence type="ECO:0007744" key="49">
    <source>
        <dbReference type="PDB" id="6BZR"/>
    </source>
</evidence>
<evidence type="ECO:0007744" key="50">
    <source>
        <dbReference type="PDB" id="6BZS"/>
    </source>
</evidence>
<evidence type="ECO:0007744" key="51">
    <source>
        <dbReference type="PDB" id="6NLO"/>
    </source>
</evidence>
<evidence type="ECO:0007744" key="52">
    <source>
        <dbReference type="PDB" id="6P7F"/>
    </source>
</evidence>
<evidence type="ECO:0007744" key="53">
    <source>
    </source>
</evidence>
<evidence type="ECO:0007829" key="54">
    <source>
        <dbReference type="PDB" id="6BZR"/>
    </source>
</evidence>
<evidence type="ECO:0007829" key="55">
    <source>
        <dbReference type="PDB" id="6BZS"/>
    </source>
</evidence>
<evidence type="ECO:0007829" key="56">
    <source>
        <dbReference type="PDB" id="6NLO"/>
    </source>
</evidence>
<evidence type="ECO:0007829" key="57">
    <source>
        <dbReference type="PDB" id="6P7F"/>
    </source>
</evidence>
<proteinExistence type="evidence at protein level"/>
<comment type="function">
    <molecule>Isoform 1</molecule>
    <text evidence="18 19 48">ATP-dependent transporter of the ATP-binding cassette (ABC) family that actively extrudes physiological compounds, and xenobiotics from cells. Mediates ATP-dependent transport of glutathione conjugates such as leukotriene-c4 (LTC4) and N-ethylmaleimide S-glutathione (NEM-GS) (in vitro), and an anionic cyclopentapeptide endothelin antagonist, BQ-123 (PubMed:11880368, PubMed:12414644). May contribute to regulate the transport of organic compounds in testes across the blood-testis-barrier (Probable). Does not appear to actively transport drugs outside the cell. Confers low levels of cellular resistance to etoposide, teniposide, anthracyclines and cisplatin (PubMed:12414644).</text>
</comment>
<comment type="function">
    <molecule>Isoform 1</molecule>
    <text evidence="34 35">Mediates the release of nucleoside triphosphates, predominantly ATP, into the circulation, where it is rapidly converted into AMP and the mineralization inhibitor inorganic pyrophosphate (PPi) by the ecto-enzyme ectonucleotide pyrophosphatase phosphodiesterase 1 (ENPP1), therefore playing a role in PPi homeostasis.</text>
</comment>
<comment type="function">
    <molecule>Isoform 2</molecule>
    <text evidence="33">Inhibits TNF-alpha-mediated apoptosis through blocking one or more caspases.</text>
</comment>
<comment type="catalytic activity">
    <molecule>Isoform 1</molecule>
    <reaction evidence="18 19">
        <text>an S-substituted glutathione(in) + ATP + H2O = an S-substituted glutathione(out) + ADP + phosphate + H(+)</text>
        <dbReference type="Rhea" id="RHEA:19121"/>
        <dbReference type="ChEBI" id="CHEBI:15377"/>
        <dbReference type="ChEBI" id="CHEBI:15378"/>
        <dbReference type="ChEBI" id="CHEBI:30616"/>
        <dbReference type="ChEBI" id="CHEBI:43474"/>
        <dbReference type="ChEBI" id="CHEBI:90779"/>
        <dbReference type="ChEBI" id="CHEBI:456216"/>
        <dbReference type="EC" id="7.6.2.3"/>
    </reaction>
    <physiologicalReaction direction="left-to-right" evidence="45 46">
        <dbReference type="Rhea" id="RHEA:19122"/>
    </physiologicalReaction>
</comment>
<comment type="catalytic activity">
    <molecule>Isoform 1</molecule>
    <reaction evidence="18 19">
        <text>leukotriene C4(in) + ATP + H2O = leukotriene C4(out) + ADP + phosphate + H(+)</text>
        <dbReference type="Rhea" id="RHEA:38963"/>
        <dbReference type="ChEBI" id="CHEBI:15377"/>
        <dbReference type="ChEBI" id="CHEBI:15378"/>
        <dbReference type="ChEBI" id="CHEBI:30616"/>
        <dbReference type="ChEBI" id="CHEBI:43474"/>
        <dbReference type="ChEBI" id="CHEBI:57973"/>
        <dbReference type="ChEBI" id="CHEBI:456216"/>
    </reaction>
    <physiologicalReaction direction="left-to-right" evidence="45 46">
        <dbReference type="Rhea" id="RHEA:38964"/>
    </physiologicalReaction>
</comment>
<comment type="cofactor">
    <cofactor evidence="18 19">
        <name>Mg(2+)</name>
        <dbReference type="ChEBI" id="CHEBI:18420"/>
    </cofactor>
</comment>
<comment type="activity regulation">
    <text evidence="18">LTC4 transport is completely inhibited by 1 mM orthovanadate.</text>
</comment>
<comment type="biophysicochemical properties">
    <kinetics>
        <KM evidence="18">600 nM for LTC4</KM>
        <KM evidence="18">282 uM for N-ethylmaleimide S-glutathione</KM>
        <Vmax evidence="18">106.0 pmol/min/mg enzyme for N-ethylmaleimide S-glutathione transport</Vmax>
        <Vmax evidence="18">50.0 pmol/min/mg enzyme for LTC4 transport</Vmax>
    </kinetics>
</comment>
<comment type="subcellular location">
    <subcellularLocation>
        <location evidence="38">Basal cell membrane</location>
        <topology evidence="3">Multi-pass membrane protein</topology>
    </subcellularLocation>
    <text evidence="38">Localized to the basal membrane of Sertoli cells.</text>
</comment>
<comment type="subcellular location">
    <molecule>Isoform 1</molecule>
    <subcellularLocation>
        <location evidence="20 32">Basolateral cell membrane</location>
        <topology evidence="3">Multi-pass membrane protein</topology>
    </subcellularLocation>
</comment>
<comment type="subcellular location">
    <molecule>Isoform 2</molecule>
    <subcellularLocation>
        <location evidence="33">Endoplasmic reticulum membrane</location>
        <topology evidence="3">Single-pass membrane protein</topology>
    </subcellularLocation>
</comment>
<comment type="alternative products">
    <event type="alternative splicing"/>
    <isoform>
        <id>O95255-1</id>
        <name>1</name>
        <sequence type="displayed"/>
    </isoform>
    <isoform>
        <id>O95255-2</id>
        <name>2</name>
        <name evidence="43">URG7</name>
        <sequence type="described" ref="VSP_047315 VSP_047316"/>
    </isoform>
    <isoform>
        <id>O95255-3</id>
        <name>3</name>
        <name>Delta19Delta24</name>
        <sequence type="described" ref="VSP_057077 VSP_057078"/>
    </isoform>
</comment>
<comment type="tissue specificity">
    <text evidence="38">Expressed in kidney and liver. Very low expression in other tissues. In testis, localized to peritubular myoid cells, Leydig cells, along the basal membrane of Sertoli cells and moderately in the adluminal compartment of the seminiferous tubules (PubMed:35307651).</text>
</comment>
<comment type="induction">
    <molecule>Isoform 2</molecule>
    <text evidence="33">Induced by HBV x antigen upon hepatitis B viral infection.</text>
</comment>
<comment type="PTM">
    <text evidence="37">Glycosylated.</text>
</comment>
<comment type="disease" evidence="9 10 12 14 15 16 18 21 22 23 25 26 28 29 34 36 37">
    <disease id="DI-00959">
        <name>Pseudoxanthoma elasticum</name>
        <acronym>PXE</acronym>
        <description>A multisystem disorder characterized by accumulation of mineralized and fragmented elastic fibers in the skin, vascular walls, and Burch membrane in the eye. Clinically, patients exhibit characteristic lesions of the posterior segment of the eye including peau d'orange, angioid streaks, and choroidal neovascularizations, of the skin including soft, ivory colored papules in a reticular pattern that predominantly affect the neck and large flexor surfaces, and of the cardiovascular system with peripheral and coronary arterial occlusive disease as well as gastrointestinal bleedings.</description>
        <dbReference type="MIM" id="264800"/>
    </disease>
    <text>The disease is caused by variants affecting the gene represented in this entry. Homozygous or compound heterozygous ABCC6 mutations have been found in the overwhelming majority of cases. Individuals carrying heterozygous mutations express limited manifestations of the pseudoxanthoma elasticum phenotype.</text>
</comment>
<comment type="disease" evidence="31">
    <disease id="DI-03382">
        <name>Arterial calcification of infancy, generalized, 2</name>
        <acronym>GACI2</acronym>
        <description>A severe autosomal recessive disorder characterized by calcification of the internal elastic lamina of muscular arteries and stenosis due to myointimal proliferation. The disorder is often fatal within the first 6 months of life because of myocardial ischemia resulting in refractory heart failure.</description>
        <dbReference type="MIM" id="614473"/>
    </disease>
    <text>The disease is caused by variants affecting the gene represented in this entry.</text>
</comment>
<comment type="miscellaneous">
    <molecule>Isoform 3</molecule>
    <text evidence="44">May function as a half transporter.</text>
</comment>
<comment type="similarity">
    <text evidence="44">Belongs to the ABC transporter superfamily. ABCC family. Conjugate transporter (TC 3.A.1.208) subfamily.</text>
</comment>
<comment type="sequence caution" evidence="44">
    <conflict type="erroneous gene model prediction">
        <sequence resource="EMBL-CDS" id="AAC15785"/>
    </conflict>
</comment>
<comment type="online information" name="ABCMdb">
    <link uri="http://abcm2.hegelab.org/search"/>
    <text>Database for mutations in ABC proteins</text>
</comment>